<protein>
    <recommendedName>
        <fullName evidence="1 12">Large ribosomal subunit protein bL36A</fullName>
    </recommendedName>
    <alternativeName>
        <fullName>50S ribosomal protein L36</fullName>
    </alternativeName>
    <alternativeName>
        <fullName>Ribosomal protein B</fullName>
    </alternativeName>
</protein>
<comment type="function">
    <text evidence="11">One of the last ribosomal proteins to be assembled in the 50S subunit, it contacts a number of helices in the 23S rRNA, acting as molecular glue (PubMed:33639093). The simultaneous presence of uL16 and bL36 probably triggers ObgE's GTPase activity and eventual dissociation from the mature 50S ribosomal subunit (PubMed:33639093).</text>
</comment>
<comment type="subunit">
    <text evidence="2 3 4 5 6 7 8 9 10 11">Part of the 50S ribosomal subunit.</text>
</comment>
<comment type="mass spectrometry" mass="4364.2" method="MALDI" evidence="2"/>
<comment type="similarity">
    <text evidence="1 13">Belongs to the bacterial ribosomal protein bL36 family.</text>
</comment>
<gene>
    <name evidence="1" type="primary">rpmJ</name>
    <name type="ordered locus">b3299</name>
    <name type="ordered locus">JW3261</name>
</gene>
<reference key="1">
    <citation type="journal article" date="1980" name="J. Biol. Chem.">
        <title>DNA sequence of the promoter region for the alpha ribosomal protein operon in Escherichia coli.</title>
        <authorList>
            <person name="Post L.E."/>
            <person name="Arfsten A.E."/>
            <person name="Davis G.R."/>
            <person name="Nomura M."/>
        </authorList>
    </citation>
    <scope>NUCLEOTIDE SEQUENCE [GENOMIC DNA]</scope>
</reference>
<reference key="2">
    <citation type="journal article" date="1997" name="Science">
        <title>The complete genome sequence of Escherichia coli K-12.</title>
        <authorList>
            <person name="Blattner F.R."/>
            <person name="Plunkett G. III"/>
            <person name="Bloch C.A."/>
            <person name="Perna N.T."/>
            <person name="Burland V."/>
            <person name="Riley M."/>
            <person name="Collado-Vides J."/>
            <person name="Glasner J.D."/>
            <person name="Rode C.K."/>
            <person name="Mayhew G.F."/>
            <person name="Gregor J."/>
            <person name="Davis N.W."/>
            <person name="Kirkpatrick H.A."/>
            <person name="Goeden M.A."/>
            <person name="Rose D.J."/>
            <person name="Mau B."/>
            <person name="Shao Y."/>
        </authorList>
    </citation>
    <scope>NUCLEOTIDE SEQUENCE [LARGE SCALE GENOMIC DNA]</scope>
    <source>
        <strain>K12 / MG1655 / ATCC 47076</strain>
    </source>
</reference>
<reference key="3">
    <citation type="journal article" date="2006" name="Mol. Syst. Biol.">
        <title>Highly accurate genome sequences of Escherichia coli K-12 strains MG1655 and W3110.</title>
        <authorList>
            <person name="Hayashi K."/>
            <person name="Morooka N."/>
            <person name="Yamamoto Y."/>
            <person name="Fujita K."/>
            <person name="Isono K."/>
            <person name="Choi S."/>
            <person name="Ohtsubo E."/>
            <person name="Baba T."/>
            <person name="Wanner B.L."/>
            <person name="Mori H."/>
            <person name="Horiuchi T."/>
        </authorList>
    </citation>
    <scope>NUCLEOTIDE SEQUENCE [LARGE SCALE GENOMIC DNA]</scope>
    <source>
        <strain>K12 / W3110 / ATCC 27325 / DSM 5911</strain>
    </source>
</reference>
<reference key="4">
    <citation type="journal article" date="1987" name="J. Biochem.">
        <title>Primary structures of and genes for new ribosomal proteins A and B in Escherichia coli.</title>
        <authorList>
            <person name="Wada A."/>
            <person name="Sako T."/>
        </authorList>
    </citation>
    <scope>PROTEIN SEQUENCE OF 2-17</scope>
    <scope>SUBUNIT</scope>
</reference>
<reference key="5">
    <citation type="journal article" date="1999" name="Anal. Biochem.">
        <title>Observation of Escherichia coli ribosomal proteins and their posttranslational modifications by mass spectrometry.</title>
        <authorList>
            <person name="Arnold R.J."/>
            <person name="Reilly J.P."/>
        </authorList>
    </citation>
    <scope>MASS SPECTROMETRY</scope>
    <scope>SUBUNIT</scope>
    <source>
        <strain>K12 / ATCC 25404 / DSM 5698 / NCIMB 11290</strain>
    </source>
</reference>
<reference key="6">
    <citation type="journal article" date="2014" name="Curr. Opin. Struct. Biol.">
        <title>A new system for naming ribosomal proteins.</title>
        <authorList>
            <person name="Ban N."/>
            <person name="Beckmann R."/>
            <person name="Cate J.H.D."/>
            <person name="Dinman J.D."/>
            <person name="Dragon F."/>
            <person name="Ellis S.R."/>
            <person name="Lafontaine D.L.J."/>
            <person name="Lindahl L."/>
            <person name="Liljas A."/>
            <person name="Lipton J.M."/>
            <person name="McAlear M.A."/>
            <person name="Moore P.B."/>
            <person name="Noller H.F."/>
            <person name="Ortega J."/>
            <person name="Panse V.G."/>
            <person name="Ramakrishnan V."/>
            <person name="Spahn C.M.T."/>
            <person name="Steitz T.A."/>
            <person name="Tchorzewski M."/>
            <person name="Tollervey D."/>
            <person name="Warren A.J."/>
            <person name="Williamson J.R."/>
            <person name="Wilson D."/>
            <person name="Yonath A."/>
            <person name="Yusupov M."/>
        </authorList>
    </citation>
    <scope>NOMENCLATURE</scope>
</reference>
<reference key="7">
    <citation type="journal article" date="2003" name="Cell">
        <title>Study of the structural dynamics of the E. coli 70S ribosome using real-space refinement.</title>
        <authorList>
            <person name="Gao H."/>
            <person name="Sengupta J."/>
            <person name="Valle M."/>
            <person name="Korostelev A."/>
            <person name="Eswar N."/>
            <person name="Stagg S.M."/>
            <person name="Van Roey P."/>
            <person name="Agrawal R.K."/>
            <person name="Harvey S.C."/>
            <person name="Sali A."/>
            <person name="Chapman M.S."/>
            <person name="Frank J."/>
        </authorList>
    </citation>
    <scope>STRUCTURE BY ELECTRON MICROSCOPY (11.50 ANGSTROMS)</scope>
    <scope>SUBUNIT</scope>
    <source>
        <strain>MRE-600</strain>
    </source>
</reference>
<reference key="8">
    <citation type="journal article" date="2005" name="Science">
        <title>Structures of the bacterial ribosome at 3.5 A resolution.</title>
        <authorList>
            <person name="Schuwirth B.S."/>
            <person name="Borovinskaya M.A."/>
            <person name="Hau C.W."/>
            <person name="Zhang W."/>
            <person name="Vila-Sanjurjo A."/>
            <person name="Holton J.M."/>
            <person name="Cate J.H.D."/>
        </authorList>
    </citation>
    <scope>X-RAY CRYSTALLOGRAPHY (3.46 ANGSTROMS) OF 2 DIFFERENT RIBOSOME STRUCTURES</scope>
    <scope>SUBUNIT</scope>
    <source>
        <strain>MRE-600</strain>
    </source>
</reference>
<reference key="9">
    <citation type="journal article" date="2014" name="Cell Rep.">
        <title>Molecular basis for the ribosome functioning as an L-tryptophan sensor.</title>
        <authorList>
            <person name="Bischoff L."/>
            <person name="Berninghausen O."/>
            <person name="Beckmann R."/>
        </authorList>
    </citation>
    <scope>STRUCTURE BY ELECTRON MICROSCOPY (3.80 ANGSTROMS) OF TNAC-STALLED 50S RIBOSOMAL SUBUNIT</scope>
    <scope>SUBUNIT</scope>
    <source>
        <strain>K12 / A19 / KC6</strain>
    </source>
</reference>
<reference key="10">
    <citation type="journal article" date="2014" name="PLoS Biol.">
        <title>Structural and functional insights into the mode of action of a universally conserved Obg GTPase.</title>
        <authorList>
            <person name="Feng B."/>
            <person name="Mandava C.S."/>
            <person name="Guo Q."/>
            <person name="Wang J."/>
            <person name="Cao W."/>
            <person name="Li N."/>
            <person name="Zhang Y."/>
            <person name="Zhang Y."/>
            <person name="Wang Z."/>
            <person name="Wu J."/>
            <person name="Sanyal S."/>
            <person name="Lei J."/>
            <person name="Gao N."/>
        </authorList>
    </citation>
    <scope>STRUCTURE BY ELECTRON MICROSCOPY (5.5 ANGSTROMS) OF 50S RIBOSOMAL SUBUNIT IN COMPLEX WITH OBGE AND GMP-PNP</scope>
    <scope>SUBUNIT</scope>
</reference>
<reference key="11">
    <citation type="journal article" date="2017" name="Nature">
        <title>Mechanistic insights into the alternative translation termination by ArfA and RF2.</title>
        <authorList>
            <person name="Ma C."/>
            <person name="Kurita D."/>
            <person name="Li N."/>
            <person name="Chen Y."/>
            <person name="Himeno H."/>
            <person name="Gao N."/>
        </authorList>
    </citation>
    <scope>STRUCTURE BY ELECTRON MICROSCOPY (3.0 ANGSTROMS) OF 70S RIBOSOME IN COMPLEX WITH ARFA AND RF2</scope>
    <scope>SUBUNIT</scope>
</reference>
<reference key="12">
    <citation type="journal article" date="2017" name="Nature">
        <title>Structural basis for ArfA-RF2-mediated translation termination on mRNAs lacking stop codons.</title>
        <authorList>
            <person name="Huter P."/>
            <person name="Mueller C."/>
            <person name="Beckert B."/>
            <person name="Arenz S."/>
            <person name="Berninghausen O."/>
            <person name="Beckmann R."/>
            <person name="Wilson D.N."/>
        </authorList>
    </citation>
    <scope>STRUCTURE BY ELECTRON MICROSCOPY (3.1 ANGSTROMS) OF 70S RIBOSOME IN COMPLEX WITH ARFA AND RF2</scope>
    <scope>SUBUNIT</scope>
</reference>
<reference key="13">
    <citation type="journal article" date="2016" name="Science">
        <title>Translational termination without a stop codon.</title>
        <authorList>
            <person name="James N.R."/>
            <person name="Brown A."/>
            <person name="Gordiyenko Y."/>
            <person name="Ramakrishnan V."/>
        </authorList>
    </citation>
    <scope>STRUCTURE BY ELECTRON MICROSCOPY (2.97 ANGSTROMS) OF 70S RIBOSOME IN COMPLEX WITH ARFA AND RF2</scope>
    <scope>SUBUNIT</scope>
</reference>
<reference key="14">
    <citation type="journal article" date="2017" name="Nature">
        <title>Structural basis of co-translational quality control by ArfA and RF2 bound to ribosome.</title>
        <authorList>
            <person name="Zeng F."/>
            <person name="Chen Y."/>
            <person name="Remis J."/>
            <person name="Shekhar M."/>
            <person name="Phillips J.C."/>
            <person name="Tajkhorshid E."/>
            <person name="Jin H."/>
        </authorList>
    </citation>
    <scope>STRUCTURE BY ELECTRON MICROSCOPY (3.52 ANGSTROMS) OF 70S RIBOSOME IN COMPLEX WITH ARFA AND RF2</scope>
    <scope>SUBUNIT</scope>
</reference>
<reference evidence="14 15" key="15">
    <citation type="journal article" date="2021" name="Mol. Cell">
        <title>Snapshots of native pre-50S ribosomes reveal a biogenesis factor network and evolutionary specialization.</title>
        <authorList>
            <person name="Nikolay R."/>
            <person name="Hilal T."/>
            <person name="Schmidt S."/>
            <person name="Qin B."/>
            <person name="Schwefel D."/>
            <person name="Vieira-Vieira C.H."/>
            <person name="Mielke T."/>
            <person name="Burger J."/>
            <person name="Loerke J."/>
            <person name="Amikura K."/>
            <person name="Flugel T."/>
            <person name="Ueda T."/>
            <person name="Selbach M."/>
            <person name="Deuerling E."/>
            <person name="Spahn C.M.T."/>
        </authorList>
    </citation>
    <scope>STRUCTURE BY ELECTRON MICROSCOPY (2.40 ANGSTROMS) IN ASSOCIATION WITH PRE-50S RIBOSOMAL SUBUNIT</scope>
    <scope>FUNCTION</scope>
    <scope>SUBUNIT</scope>
    <scope>23S RRNA-BINDING</scope>
    <source>
        <strain>K12 / MG1655 / ATCC 47076</strain>
    </source>
</reference>
<proteinExistence type="evidence at protein level"/>
<organism>
    <name type="scientific">Escherichia coli (strain K12)</name>
    <dbReference type="NCBI Taxonomy" id="83333"/>
    <lineage>
        <taxon>Bacteria</taxon>
        <taxon>Pseudomonadati</taxon>
        <taxon>Pseudomonadota</taxon>
        <taxon>Gammaproteobacteria</taxon>
        <taxon>Enterobacterales</taxon>
        <taxon>Enterobacteriaceae</taxon>
        <taxon>Escherichia</taxon>
    </lineage>
</organism>
<name>RL36_ECOLI</name>
<sequence length="38" mass="4364">MKVRASVKKLCRNCKIVKRDGVIRVICSAEPKHKQRQG</sequence>
<evidence type="ECO:0000255" key="1">
    <source>
        <dbReference type="HAMAP-Rule" id="MF_00251"/>
    </source>
</evidence>
<evidence type="ECO:0000269" key="2">
    <source>
    </source>
</evidence>
<evidence type="ECO:0000269" key="3">
    <source>
    </source>
</evidence>
<evidence type="ECO:0000269" key="4">
    <source>
    </source>
</evidence>
<evidence type="ECO:0000269" key="5">
    <source>
    </source>
</evidence>
<evidence type="ECO:0000269" key="6">
    <source>
    </source>
</evidence>
<evidence type="ECO:0000269" key="7">
    <source>
    </source>
</evidence>
<evidence type="ECO:0000269" key="8">
    <source>
    </source>
</evidence>
<evidence type="ECO:0000269" key="9">
    <source>
    </source>
</evidence>
<evidence type="ECO:0000269" key="10">
    <source>
    </source>
</evidence>
<evidence type="ECO:0000269" key="11">
    <source>
    </source>
</evidence>
<evidence type="ECO:0000303" key="12">
    <source>
    </source>
</evidence>
<evidence type="ECO:0000305" key="13"/>
<evidence type="ECO:0007744" key="14">
    <source>
        <dbReference type="PDB" id="7BL4"/>
    </source>
</evidence>
<evidence type="ECO:0007744" key="15">
    <source>
        <dbReference type="PDB" id="7BL6"/>
    </source>
</evidence>
<evidence type="ECO:0007829" key="16">
    <source>
        <dbReference type="PDB" id="8CGK"/>
    </source>
</evidence>
<dbReference type="EMBL" id="AH003257">
    <property type="protein sequence ID" value="AAA83902.1"/>
    <property type="molecule type" value="Genomic_DNA"/>
</dbReference>
<dbReference type="EMBL" id="X01563">
    <property type="protein sequence ID" value="CAA25726.1"/>
    <property type="molecule type" value="Genomic_DNA"/>
</dbReference>
<dbReference type="EMBL" id="U18997">
    <property type="protein sequence ID" value="AAA58096.1"/>
    <property type="molecule type" value="Genomic_DNA"/>
</dbReference>
<dbReference type="EMBL" id="U00096">
    <property type="protein sequence ID" value="AAC76324.1"/>
    <property type="molecule type" value="Genomic_DNA"/>
</dbReference>
<dbReference type="EMBL" id="AP009048">
    <property type="protein sequence ID" value="BAE77992.1"/>
    <property type="molecule type" value="Genomic_DNA"/>
</dbReference>
<dbReference type="PIR" id="S14057">
    <property type="entry name" value="R5EC36"/>
</dbReference>
<dbReference type="RefSeq" id="NP_417758.1">
    <property type="nucleotide sequence ID" value="NC_000913.3"/>
</dbReference>
<dbReference type="RefSeq" id="WP_000868187.1">
    <property type="nucleotide sequence ID" value="NZ_STEB01000038.1"/>
</dbReference>
<dbReference type="PDB" id="2J28">
    <property type="method" value="EM"/>
    <property type="resolution" value="8.00 A"/>
    <property type="chains" value="4=1-38"/>
</dbReference>
<dbReference type="PDB" id="2RDO">
    <property type="method" value="EM"/>
    <property type="resolution" value="9.10 A"/>
    <property type="chains" value="4=1-38"/>
</dbReference>
<dbReference type="PDB" id="3BBX">
    <property type="method" value="EM"/>
    <property type="resolution" value="10.00 A"/>
    <property type="chains" value="4=1-38"/>
</dbReference>
<dbReference type="PDB" id="3J5L">
    <property type="method" value="EM"/>
    <property type="resolution" value="6.60 A"/>
    <property type="chains" value="4=1-38"/>
</dbReference>
<dbReference type="PDB" id="3J7Z">
    <property type="method" value="EM"/>
    <property type="resolution" value="3.90 A"/>
    <property type="chains" value="4=1-38"/>
</dbReference>
<dbReference type="PDB" id="3J8G">
    <property type="method" value="EM"/>
    <property type="resolution" value="5.00 A"/>
    <property type="chains" value="8=1-38"/>
</dbReference>
<dbReference type="PDB" id="3J9Y">
    <property type="method" value="EM"/>
    <property type="resolution" value="3.90 A"/>
    <property type="chains" value="4=1-38"/>
</dbReference>
<dbReference type="PDB" id="3J9Z">
    <property type="method" value="EM"/>
    <property type="resolution" value="3.60 A"/>
    <property type="chains" value="L5=1-38"/>
</dbReference>
<dbReference type="PDB" id="3JA1">
    <property type="method" value="EM"/>
    <property type="resolution" value="3.60 A"/>
    <property type="chains" value="L7=1-38"/>
</dbReference>
<dbReference type="PDB" id="3JBU">
    <property type="method" value="EM"/>
    <property type="resolution" value="3.64 A"/>
    <property type="chains" value="8=1-38"/>
</dbReference>
<dbReference type="PDB" id="3JBV">
    <property type="method" value="EM"/>
    <property type="resolution" value="3.32 A"/>
    <property type="chains" value="8=1-38"/>
</dbReference>
<dbReference type="PDB" id="3JCD">
    <property type="method" value="EM"/>
    <property type="resolution" value="3.70 A"/>
    <property type="chains" value="4=1-38"/>
</dbReference>
<dbReference type="PDB" id="3JCE">
    <property type="method" value="EM"/>
    <property type="resolution" value="3.20 A"/>
    <property type="chains" value="4=1-38"/>
</dbReference>
<dbReference type="PDB" id="3JCJ">
    <property type="method" value="EM"/>
    <property type="resolution" value="3.70 A"/>
    <property type="chains" value="d=1-38"/>
</dbReference>
<dbReference type="PDB" id="3JCN">
    <property type="method" value="EM"/>
    <property type="resolution" value="4.60 A"/>
    <property type="chains" value="4=1-38"/>
</dbReference>
<dbReference type="PDB" id="4CSU">
    <property type="method" value="EM"/>
    <property type="resolution" value="5.50 A"/>
    <property type="chains" value="8=1-38"/>
</dbReference>
<dbReference type="PDB" id="4U1U">
    <property type="method" value="X-ray"/>
    <property type="resolution" value="2.95 A"/>
    <property type="chains" value="B4/D4=1-38"/>
</dbReference>
<dbReference type="PDB" id="4U1V">
    <property type="method" value="X-ray"/>
    <property type="resolution" value="3.00 A"/>
    <property type="chains" value="B4/D4=1-38"/>
</dbReference>
<dbReference type="PDB" id="4U20">
    <property type="method" value="X-ray"/>
    <property type="resolution" value="2.90 A"/>
    <property type="chains" value="B4/D4=1-38"/>
</dbReference>
<dbReference type="PDB" id="4U24">
    <property type="method" value="X-ray"/>
    <property type="resolution" value="2.90 A"/>
    <property type="chains" value="B4/D4=1-38"/>
</dbReference>
<dbReference type="PDB" id="4U25">
    <property type="method" value="X-ray"/>
    <property type="resolution" value="2.90 A"/>
    <property type="chains" value="B4/D4=1-38"/>
</dbReference>
<dbReference type="PDB" id="4U26">
    <property type="method" value="X-ray"/>
    <property type="resolution" value="2.80 A"/>
    <property type="chains" value="B4/D4=1-38"/>
</dbReference>
<dbReference type="PDB" id="4U27">
    <property type="method" value="X-ray"/>
    <property type="resolution" value="2.80 A"/>
    <property type="chains" value="B4/D4=1-38"/>
</dbReference>
<dbReference type="PDB" id="4UY8">
    <property type="method" value="EM"/>
    <property type="resolution" value="3.80 A"/>
    <property type="chains" value="4=1-38"/>
</dbReference>
<dbReference type="PDB" id="4V47">
    <property type="method" value="EM"/>
    <property type="resolution" value="12.30 A"/>
    <property type="chains" value="A4=1-38"/>
</dbReference>
<dbReference type="PDB" id="4V48">
    <property type="method" value="EM"/>
    <property type="resolution" value="11.50 A"/>
    <property type="chains" value="A4=1-38"/>
</dbReference>
<dbReference type="PDB" id="4V4H">
    <property type="method" value="X-ray"/>
    <property type="resolution" value="3.46 A"/>
    <property type="chains" value="B4/D4=1-38"/>
</dbReference>
<dbReference type="PDB" id="4V4Q">
    <property type="method" value="X-ray"/>
    <property type="resolution" value="3.46 A"/>
    <property type="chains" value="B4/D4=1-38"/>
</dbReference>
<dbReference type="PDB" id="4V50">
    <property type="method" value="X-ray"/>
    <property type="resolution" value="3.22 A"/>
    <property type="chains" value="B4/D4=1-38"/>
</dbReference>
<dbReference type="PDB" id="4V52">
    <property type="method" value="X-ray"/>
    <property type="resolution" value="3.21 A"/>
    <property type="chains" value="B4/D4=1-38"/>
</dbReference>
<dbReference type="PDB" id="4V53">
    <property type="method" value="X-ray"/>
    <property type="resolution" value="3.54 A"/>
    <property type="chains" value="B4/D4=1-38"/>
</dbReference>
<dbReference type="PDB" id="4V54">
    <property type="method" value="X-ray"/>
    <property type="resolution" value="3.30 A"/>
    <property type="chains" value="B4/D4=1-38"/>
</dbReference>
<dbReference type="PDB" id="4V55">
    <property type="method" value="X-ray"/>
    <property type="resolution" value="4.00 A"/>
    <property type="chains" value="B4/D4=1-38"/>
</dbReference>
<dbReference type="PDB" id="4V56">
    <property type="method" value="X-ray"/>
    <property type="resolution" value="3.93 A"/>
    <property type="chains" value="B4/D4=1-38"/>
</dbReference>
<dbReference type="PDB" id="4V57">
    <property type="method" value="X-ray"/>
    <property type="resolution" value="3.50 A"/>
    <property type="chains" value="B4/D4=1-38"/>
</dbReference>
<dbReference type="PDB" id="4V5B">
    <property type="method" value="X-ray"/>
    <property type="resolution" value="3.74 A"/>
    <property type="chains" value="A4/C4=1-38"/>
</dbReference>
<dbReference type="PDB" id="4V5H">
    <property type="method" value="EM"/>
    <property type="resolution" value="5.80 A"/>
    <property type="chains" value="B8=1-38"/>
</dbReference>
<dbReference type="PDB" id="4V5Y">
    <property type="method" value="X-ray"/>
    <property type="resolution" value="4.45 A"/>
    <property type="chains" value="B4/D4=1-38"/>
</dbReference>
<dbReference type="PDB" id="4V64">
    <property type="method" value="X-ray"/>
    <property type="resolution" value="3.50 A"/>
    <property type="chains" value="B4/D4=1-38"/>
</dbReference>
<dbReference type="PDB" id="4V65">
    <property type="method" value="EM"/>
    <property type="resolution" value="9.00 A"/>
    <property type="chains" value="BX=1-38"/>
</dbReference>
<dbReference type="PDB" id="4V66">
    <property type="method" value="EM"/>
    <property type="resolution" value="9.00 A"/>
    <property type="chains" value="BX=1-38"/>
</dbReference>
<dbReference type="PDB" id="4V69">
    <property type="method" value="EM"/>
    <property type="resolution" value="6.70 A"/>
    <property type="chains" value="B4=1-38"/>
</dbReference>
<dbReference type="PDB" id="4V6C">
    <property type="method" value="X-ray"/>
    <property type="resolution" value="3.19 A"/>
    <property type="chains" value="B4/D4=1-38"/>
</dbReference>
<dbReference type="PDB" id="4V6D">
    <property type="method" value="X-ray"/>
    <property type="resolution" value="3.81 A"/>
    <property type="chains" value="B4/D4=1-38"/>
</dbReference>
<dbReference type="PDB" id="4V6E">
    <property type="method" value="X-ray"/>
    <property type="resolution" value="3.71 A"/>
    <property type="chains" value="B4/D4=1-38"/>
</dbReference>
<dbReference type="PDB" id="4V6K">
    <property type="method" value="EM"/>
    <property type="resolution" value="8.25 A"/>
    <property type="chains" value="Ag=1-38"/>
</dbReference>
<dbReference type="PDB" id="4V6L">
    <property type="method" value="EM"/>
    <property type="resolution" value="13.20 A"/>
    <property type="chains" value="Bg=1-38"/>
</dbReference>
<dbReference type="PDB" id="4V6M">
    <property type="method" value="EM"/>
    <property type="resolution" value="7.10 A"/>
    <property type="chains" value="B4=1-38"/>
</dbReference>
<dbReference type="PDB" id="4V6N">
    <property type="method" value="EM"/>
    <property type="resolution" value="12.10 A"/>
    <property type="chains" value="A7=1-38"/>
</dbReference>
<dbReference type="PDB" id="4V6O">
    <property type="method" value="EM"/>
    <property type="resolution" value="14.70 A"/>
    <property type="chains" value="B7=1-38"/>
</dbReference>
<dbReference type="PDB" id="4V6P">
    <property type="method" value="EM"/>
    <property type="resolution" value="13.50 A"/>
    <property type="chains" value="B7=1-38"/>
</dbReference>
<dbReference type="PDB" id="4V6Q">
    <property type="method" value="EM"/>
    <property type="resolution" value="11.50 A"/>
    <property type="chains" value="B7=1-38"/>
</dbReference>
<dbReference type="PDB" id="4V6R">
    <property type="method" value="EM"/>
    <property type="resolution" value="11.50 A"/>
    <property type="chains" value="B7=1-38"/>
</dbReference>
<dbReference type="PDB" id="4V6S">
    <property type="method" value="EM"/>
    <property type="resolution" value="13.10 A"/>
    <property type="chains" value="A7=1-38"/>
</dbReference>
<dbReference type="PDB" id="4V6T">
    <property type="method" value="EM"/>
    <property type="resolution" value="8.30 A"/>
    <property type="chains" value="B4=1-38"/>
</dbReference>
<dbReference type="PDB" id="4V6V">
    <property type="method" value="EM"/>
    <property type="resolution" value="9.80 A"/>
    <property type="chains" value="B9=1-38"/>
</dbReference>
<dbReference type="PDB" id="4V6Y">
    <property type="method" value="EM"/>
    <property type="resolution" value="12.00 A"/>
    <property type="chains" value="B4=1-38"/>
</dbReference>
<dbReference type="PDB" id="4V6Z">
    <property type="method" value="EM"/>
    <property type="resolution" value="12.00 A"/>
    <property type="chains" value="B4=1-38"/>
</dbReference>
<dbReference type="PDB" id="4V70">
    <property type="method" value="EM"/>
    <property type="resolution" value="17.00 A"/>
    <property type="chains" value="B4=1-38"/>
</dbReference>
<dbReference type="PDB" id="4V71">
    <property type="method" value="EM"/>
    <property type="resolution" value="20.00 A"/>
    <property type="chains" value="B4=1-38"/>
</dbReference>
<dbReference type="PDB" id="4V72">
    <property type="method" value="EM"/>
    <property type="resolution" value="13.00 A"/>
    <property type="chains" value="B4=1-38"/>
</dbReference>
<dbReference type="PDB" id="4V73">
    <property type="method" value="EM"/>
    <property type="resolution" value="15.00 A"/>
    <property type="chains" value="B4=1-38"/>
</dbReference>
<dbReference type="PDB" id="4V74">
    <property type="method" value="EM"/>
    <property type="resolution" value="17.00 A"/>
    <property type="chains" value="B4=1-38"/>
</dbReference>
<dbReference type="PDB" id="4V75">
    <property type="method" value="EM"/>
    <property type="resolution" value="12.00 A"/>
    <property type="chains" value="B4=1-38"/>
</dbReference>
<dbReference type="PDB" id="4V76">
    <property type="method" value="EM"/>
    <property type="resolution" value="17.00 A"/>
    <property type="chains" value="B4=1-38"/>
</dbReference>
<dbReference type="PDB" id="4V77">
    <property type="method" value="EM"/>
    <property type="resolution" value="17.00 A"/>
    <property type="chains" value="B4=1-38"/>
</dbReference>
<dbReference type="PDB" id="4V78">
    <property type="method" value="EM"/>
    <property type="resolution" value="20.00 A"/>
    <property type="chains" value="B4=1-38"/>
</dbReference>
<dbReference type="PDB" id="4V79">
    <property type="method" value="EM"/>
    <property type="resolution" value="15.00 A"/>
    <property type="chains" value="B4=1-38"/>
</dbReference>
<dbReference type="PDB" id="4V7A">
    <property type="method" value="EM"/>
    <property type="resolution" value="9.00 A"/>
    <property type="chains" value="B4=1-38"/>
</dbReference>
<dbReference type="PDB" id="4V7B">
    <property type="method" value="EM"/>
    <property type="resolution" value="6.80 A"/>
    <property type="chains" value="B4=1-38"/>
</dbReference>
<dbReference type="PDB" id="4V7C">
    <property type="method" value="EM"/>
    <property type="resolution" value="7.60 A"/>
    <property type="chains" value="B7=1-38"/>
</dbReference>
<dbReference type="PDB" id="4V7D">
    <property type="method" value="EM"/>
    <property type="resolution" value="7.60 A"/>
    <property type="chains" value="A8=1-38"/>
</dbReference>
<dbReference type="PDB" id="4V7I">
    <property type="method" value="EM"/>
    <property type="resolution" value="9.60 A"/>
    <property type="chains" value="A4=1-38"/>
</dbReference>
<dbReference type="PDB" id="4V7S">
    <property type="method" value="X-ray"/>
    <property type="resolution" value="3.25 A"/>
    <property type="chains" value="B4/D4=1-38"/>
</dbReference>
<dbReference type="PDB" id="4V7T">
    <property type="method" value="X-ray"/>
    <property type="resolution" value="3.19 A"/>
    <property type="chains" value="B4/D4=1-38"/>
</dbReference>
<dbReference type="PDB" id="4V7U">
    <property type="method" value="X-ray"/>
    <property type="resolution" value="3.10 A"/>
    <property type="chains" value="B4/D4=1-38"/>
</dbReference>
<dbReference type="PDB" id="4V7V">
    <property type="method" value="X-ray"/>
    <property type="resolution" value="3.29 A"/>
    <property type="chains" value="B4/D4=1-38"/>
</dbReference>
<dbReference type="PDB" id="4V85">
    <property type="method" value="X-ray"/>
    <property type="resolution" value="3.20 A"/>
    <property type="chains" value="B8=1-38"/>
</dbReference>
<dbReference type="PDB" id="4V89">
    <property type="method" value="X-ray"/>
    <property type="resolution" value="3.70 A"/>
    <property type="chains" value="B8=1-38"/>
</dbReference>
<dbReference type="PDB" id="4V9C">
    <property type="method" value="X-ray"/>
    <property type="resolution" value="3.30 A"/>
    <property type="chains" value="B4/D4=1-38"/>
</dbReference>
<dbReference type="PDB" id="4V9D">
    <property type="method" value="X-ray"/>
    <property type="resolution" value="3.00 A"/>
    <property type="chains" value="C4/D4=1-38"/>
</dbReference>
<dbReference type="PDB" id="4V9O">
    <property type="method" value="X-ray"/>
    <property type="resolution" value="2.90 A"/>
    <property type="chains" value="A4/C4/E4/G4=1-38"/>
</dbReference>
<dbReference type="PDB" id="4V9P">
    <property type="method" value="X-ray"/>
    <property type="resolution" value="2.90 A"/>
    <property type="chains" value="A4/C4/E4/G4=1-38"/>
</dbReference>
<dbReference type="PDB" id="4WF1">
    <property type="method" value="X-ray"/>
    <property type="resolution" value="3.09 A"/>
    <property type="chains" value="B4/D4=1-38"/>
</dbReference>
<dbReference type="PDB" id="4WOI">
    <property type="method" value="X-ray"/>
    <property type="resolution" value="3.00 A"/>
    <property type="chains" value="B4/C4=1-38"/>
</dbReference>
<dbReference type="PDB" id="4WWW">
    <property type="method" value="X-ray"/>
    <property type="resolution" value="3.10 A"/>
    <property type="chains" value="R4/Y4=1-38"/>
</dbReference>
<dbReference type="PDB" id="4YBB">
    <property type="method" value="X-ray"/>
    <property type="resolution" value="2.10 A"/>
    <property type="chains" value="C5/D5=1-38"/>
</dbReference>
<dbReference type="PDB" id="5ADY">
    <property type="method" value="EM"/>
    <property type="resolution" value="4.50 A"/>
    <property type="chains" value="4=1-38"/>
</dbReference>
<dbReference type="PDB" id="5AFI">
    <property type="method" value="EM"/>
    <property type="resolution" value="2.90 A"/>
    <property type="chains" value="4=1-38"/>
</dbReference>
<dbReference type="PDB" id="5AKA">
    <property type="method" value="EM"/>
    <property type="resolution" value="5.70 A"/>
    <property type="chains" value="4=1-38"/>
</dbReference>
<dbReference type="PDB" id="5GAD">
    <property type="method" value="EM"/>
    <property type="resolution" value="3.70 A"/>
    <property type="chains" value="f=1-38"/>
</dbReference>
<dbReference type="PDB" id="5GAE">
    <property type="method" value="EM"/>
    <property type="resolution" value="3.33 A"/>
    <property type="chains" value="f=1-38"/>
</dbReference>
<dbReference type="PDB" id="5GAF">
    <property type="method" value="EM"/>
    <property type="resolution" value="4.30 A"/>
    <property type="chains" value="f=1-38"/>
</dbReference>
<dbReference type="PDB" id="5GAG">
    <property type="method" value="EM"/>
    <property type="resolution" value="3.80 A"/>
    <property type="chains" value="f=1-38"/>
</dbReference>
<dbReference type="PDB" id="5GAH">
    <property type="method" value="EM"/>
    <property type="resolution" value="3.80 A"/>
    <property type="chains" value="f=1-38"/>
</dbReference>
<dbReference type="PDB" id="5H5U">
    <property type="method" value="EM"/>
    <property type="resolution" value="3.00 A"/>
    <property type="chains" value="f=1-38"/>
</dbReference>
<dbReference type="PDB" id="5IQR">
    <property type="method" value="EM"/>
    <property type="resolution" value="3.00 A"/>
    <property type="chains" value="f=1-38"/>
</dbReference>
<dbReference type="PDB" id="5IT8">
    <property type="method" value="X-ray"/>
    <property type="resolution" value="3.12 A"/>
    <property type="chains" value="C5/D5=1-38"/>
</dbReference>
<dbReference type="PDB" id="5J5B">
    <property type="method" value="X-ray"/>
    <property type="resolution" value="2.80 A"/>
    <property type="chains" value="C5/D5=1-38"/>
</dbReference>
<dbReference type="PDB" id="5J7L">
    <property type="method" value="X-ray"/>
    <property type="resolution" value="3.00 A"/>
    <property type="chains" value="C5/D5=1-38"/>
</dbReference>
<dbReference type="PDB" id="5J88">
    <property type="method" value="X-ray"/>
    <property type="resolution" value="3.32 A"/>
    <property type="chains" value="C5/D5=1-38"/>
</dbReference>
<dbReference type="PDB" id="5J8A">
    <property type="method" value="X-ray"/>
    <property type="resolution" value="3.10 A"/>
    <property type="chains" value="C5/D5=1-38"/>
</dbReference>
<dbReference type="PDB" id="5J91">
    <property type="method" value="X-ray"/>
    <property type="resolution" value="2.96 A"/>
    <property type="chains" value="C5/D5=1-38"/>
</dbReference>
<dbReference type="PDB" id="5JC9">
    <property type="method" value="X-ray"/>
    <property type="resolution" value="3.03 A"/>
    <property type="chains" value="C5/D5=1-38"/>
</dbReference>
<dbReference type="PDB" id="5JTE">
    <property type="method" value="EM"/>
    <property type="resolution" value="3.60 A"/>
    <property type="chains" value="B4=1-38"/>
</dbReference>
<dbReference type="PDB" id="5JU8">
    <property type="method" value="EM"/>
    <property type="resolution" value="3.60 A"/>
    <property type="chains" value="B4=1-38"/>
</dbReference>
<dbReference type="PDB" id="5KCR">
    <property type="method" value="EM"/>
    <property type="resolution" value="3.60 A"/>
    <property type="chains" value="19=1-38"/>
</dbReference>
<dbReference type="PDB" id="5KCS">
    <property type="method" value="EM"/>
    <property type="resolution" value="3.90 A"/>
    <property type="chains" value="19=1-38"/>
</dbReference>
<dbReference type="PDB" id="5KPS">
    <property type="method" value="EM"/>
    <property type="resolution" value="3.90 A"/>
    <property type="chains" value="6=1-38"/>
</dbReference>
<dbReference type="PDB" id="5KPV">
    <property type="method" value="EM"/>
    <property type="resolution" value="4.10 A"/>
    <property type="chains" value="5=1-38"/>
</dbReference>
<dbReference type="PDB" id="5KPW">
    <property type="method" value="EM"/>
    <property type="resolution" value="3.90 A"/>
    <property type="chains" value="5=1-38"/>
</dbReference>
<dbReference type="PDB" id="5KPX">
    <property type="method" value="EM"/>
    <property type="resolution" value="3.90 A"/>
    <property type="chains" value="5=1-38"/>
</dbReference>
<dbReference type="PDB" id="5L3P">
    <property type="method" value="EM"/>
    <property type="resolution" value="3.70 A"/>
    <property type="chains" value="9=1-38"/>
</dbReference>
<dbReference type="PDB" id="5LZA">
    <property type="method" value="EM"/>
    <property type="resolution" value="3.60 A"/>
    <property type="chains" value="4=1-38"/>
</dbReference>
<dbReference type="PDB" id="5LZB">
    <property type="method" value="EM"/>
    <property type="resolution" value="5.30 A"/>
    <property type="chains" value="4=1-38"/>
</dbReference>
<dbReference type="PDB" id="5LZC">
    <property type="method" value="EM"/>
    <property type="resolution" value="4.80 A"/>
    <property type="chains" value="4=1-38"/>
</dbReference>
<dbReference type="PDB" id="5LZD">
    <property type="method" value="EM"/>
    <property type="resolution" value="3.40 A"/>
    <property type="chains" value="4=1-38"/>
</dbReference>
<dbReference type="PDB" id="5LZE">
    <property type="method" value="EM"/>
    <property type="resolution" value="3.50 A"/>
    <property type="chains" value="4=1-38"/>
</dbReference>
<dbReference type="PDB" id="5LZF">
    <property type="method" value="EM"/>
    <property type="resolution" value="4.60 A"/>
    <property type="chains" value="4=1-38"/>
</dbReference>
<dbReference type="PDB" id="5MDV">
    <property type="method" value="EM"/>
    <property type="resolution" value="2.97 A"/>
    <property type="chains" value="f=1-38"/>
</dbReference>
<dbReference type="PDB" id="5MDW">
    <property type="method" value="EM"/>
    <property type="resolution" value="3.06 A"/>
    <property type="chains" value="f=1-38"/>
</dbReference>
<dbReference type="PDB" id="5MDY">
    <property type="method" value="EM"/>
    <property type="resolution" value="3.35 A"/>
    <property type="chains" value="f=1-38"/>
</dbReference>
<dbReference type="PDB" id="5MDZ">
    <property type="method" value="EM"/>
    <property type="resolution" value="3.10 A"/>
    <property type="chains" value="f=1-38"/>
</dbReference>
<dbReference type="PDB" id="5MGP">
    <property type="method" value="EM"/>
    <property type="resolution" value="3.10 A"/>
    <property type="chains" value="4=1-38"/>
</dbReference>
<dbReference type="PDB" id="5NCO">
    <property type="method" value="EM"/>
    <property type="resolution" value="4.80 A"/>
    <property type="chains" value="f=1-38"/>
</dbReference>
<dbReference type="PDB" id="5NP6">
    <property type="method" value="EM"/>
    <property type="resolution" value="3.60 A"/>
    <property type="chains" value="2=1-38"/>
</dbReference>
<dbReference type="PDB" id="5NWY">
    <property type="method" value="EM"/>
    <property type="resolution" value="2.93 A"/>
    <property type="chains" value="r=1-38"/>
</dbReference>
<dbReference type="PDB" id="5O2R">
    <property type="method" value="EM"/>
    <property type="resolution" value="3.40 A"/>
    <property type="chains" value="4=1-38"/>
</dbReference>
<dbReference type="PDB" id="5U4I">
    <property type="method" value="EM"/>
    <property type="resolution" value="3.50 A"/>
    <property type="chains" value="5=1-38"/>
</dbReference>
<dbReference type="PDB" id="5U9F">
    <property type="method" value="EM"/>
    <property type="resolution" value="3.20 A"/>
    <property type="chains" value="34=1-38"/>
</dbReference>
<dbReference type="PDB" id="5U9G">
    <property type="method" value="EM"/>
    <property type="resolution" value="3.20 A"/>
    <property type="chains" value="34=1-38"/>
</dbReference>
<dbReference type="PDB" id="5UYK">
    <property type="method" value="EM"/>
    <property type="resolution" value="3.90 A"/>
    <property type="chains" value="34=1-38"/>
</dbReference>
<dbReference type="PDB" id="5UYL">
    <property type="method" value="EM"/>
    <property type="resolution" value="3.60 A"/>
    <property type="chains" value="34=1-38"/>
</dbReference>
<dbReference type="PDB" id="5UYM">
    <property type="method" value="EM"/>
    <property type="resolution" value="3.20 A"/>
    <property type="chains" value="34=1-38"/>
</dbReference>
<dbReference type="PDB" id="5UYN">
    <property type="method" value="EM"/>
    <property type="resolution" value="4.00 A"/>
    <property type="chains" value="34=1-38"/>
</dbReference>
<dbReference type="PDB" id="5UYP">
    <property type="method" value="EM"/>
    <property type="resolution" value="3.90 A"/>
    <property type="chains" value="34=1-38"/>
</dbReference>
<dbReference type="PDB" id="5UYQ">
    <property type="method" value="EM"/>
    <property type="resolution" value="3.80 A"/>
    <property type="chains" value="34=1-38"/>
</dbReference>
<dbReference type="PDB" id="5WDT">
    <property type="method" value="EM"/>
    <property type="resolution" value="3.00 A"/>
    <property type="chains" value="4=1-38"/>
</dbReference>
<dbReference type="PDB" id="5WE4">
    <property type="method" value="EM"/>
    <property type="resolution" value="3.10 A"/>
    <property type="chains" value="4=1-38"/>
</dbReference>
<dbReference type="PDB" id="5WE6">
    <property type="method" value="EM"/>
    <property type="resolution" value="3.40 A"/>
    <property type="chains" value="4=1-38"/>
</dbReference>
<dbReference type="PDB" id="5WF0">
    <property type="method" value="EM"/>
    <property type="resolution" value="3.60 A"/>
    <property type="chains" value="4=1-38"/>
</dbReference>
<dbReference type="PDB" id="5WFK">
    <property type="method" value="EM"/>
    <property type="resolution" value="3.40 A"/>
    <property type="chains" value="4=1-38"/>
</dbReference>
<dbReference type="PDB" id="5WFS">
    <property type="method" value="EM"/>
    <property type="resolution" value="3.00 A"/>
    <property type="chains" value="4=1-38"/>
</dbReference>
<dbReference type="PDB" id="6BU8">
    <property type="method" value="EM"/>
    <property type="resolution" value="3.50 A"/>
    <property type="chains" value="34=1-38"/>
</dbReference>
<dbReference type="PDB" id="6BY1">
    <property type="method" value="X-ray"/>
    <property type="resolution" value="3.94 A"/>
    <property type="chains" value="C6/D6=1-38"/>
</dbReference>
<dbReference type="PDB" id="6C4I">
    <property type="method" value="EM"/>
    <property type="resolution" value="3.24 A"/>
    <property type="chains" value="6=1-38"/>
</dbReference>
<dbReference type="PDB" id="6DNC">
    <property type="method" value="EM"/>
    <property type="resolution" value="3.70 A"/>
    <property type="chains" value="JA=1-38"/>
</dbReference>
<dbReference type="PDB" id="6ENF">
    <property type="method" value="EM"/>
    <property type="resolution" value="3.20 A"/>
    <property type="chains" value="4=1-38"/>
</dbReference>
<dbReference type="PDB" id="6ENJ">
    <property type="method" value="EM"/>
    <property type="resolution" value="3.70 A"/>
    <property type="chains" value="4=1-38"/>
</dbReference>
<dbReference type="PDB" id="6ENU">
    <property type="method" value="EM"/>
    <property type="resolution" value="3.10 A"/>
    <property type="chains" value="4=1-38"/>
</dbReference>
<dbReference type="PDB" id="6GWT">
    <property type="method" value="EM"/>
    <property type="resolution" value="3.80 A"/>
    <property type="chains" value="4=1-38"/>
</dbReference>
<dbReference type="PDB" id="6GXM">
    <property type="method" value="EM"/>
    <property type="resolution" value="3.80 A"/>
    <property type="chains" value="4=1-38"/>
</dbReference>
<dbReference type="PDB" id="6GXN">
    <property type="method" value="EM"/>
    <property type="resolution" value="3.90 A"/>
    <property type="chains" value="4=1-38"/>
</dbReference>
<dbReference type="PDB" id="6GXO">
    <property type="method" value="EM"/>
    <property type="resolution" value="3.90 A"/>
    <property type="chains" value="4=1-38"/>
</dbReference>
<dbReference type="PDB" id="6GXP">
    <property type="method" value="EM"/>
    <property type="resolution" value="4.40 A"/>
    <property type="chains" value="4=1-38"/>
</dbReference>
<dbReference type="PDB" id="6H4N">
    <property type="method" value="EM"/>
    <property type="resolution" value="3.00 A"/>
    <property type="chains" value="4=1-38"/>
</dbReference>
<dbReference type="PDB" id="6H58">
    <property type="method" value="EM"/>
    <property type="resolution" value="7.90 A"/>
    <property type="chains" value="4/44=1-38"/>
</dbReference>
<dbReference type="PDB" id="6HRM">
    <property type="method" value="EM"/>
    <property type="resolution" value="2.96 A"/>
    <property type="chains" value="f=1-38"/>
</dbReference>
<dbReference type="PDB" id="6I0Y">
    <property type="method" value="EM"/>
    <property type="resolution" value="3.20 A"/>
    <property type="chains" value="4=1-38"/>
</dbReference>
<dbReference type="PDB" id="6O9J">
    <property type="method" value="EM"/>
    <property type="resolution" value="3.90 A"/>
    <property type="chains" value="5=1-38"/>
</dbReference>
<dbReference type="PDB" id="6O9K">
    <property type="method" value="EM"/>
    <property type="resolution" value="4.00 A"/>
    <property type="chains" value="Y=1-38"/>
</dbReference>
<dbReference type="PDB" id="6OFX">
    <property type="method" value="EM"/>
    <property type="resolution" value="3.30 A"/>
    <property type="chains" value="F=1-38"/>
</dbReference>
<dbReference type="PDB" id="6OG7">
    <property type="method" value="EM"/>
    <property type="resolution" value="3.30 A"/>
    <property type="chains" value="F=1-38"/>
</dbReference>
<dbReference type="PDB" id="6OGF">
    <property type="method" value="EM"/>
    <property type="resolution" value="3.90 A"/>
    <property type="chains" value="F=1-38"/>
</dbReference>
<dbReference type="PDB" id="6OGG">
    <property type="method" value="EM"/>
    <property type="resolution" value="4.20 A"/>
    <property type="chains" value="F=1-38"/>
</dbReference>
<dbReference type="PDB" id="6OGI">
    <property type="method" value="EM"/>
    <property type="resolution" value="3.40 A"/>
    <property type="chains" value="F=1-38"/>
</dbReference>
<dbReference type="PDB" id="6OM6">
    <property type="method" value="EM"/>
    <property type="resolution" value="3.10 A"/>
    <property type="chains" value="f=1-38"/>
</dbReference>
<dbReference type="PDB" id="6ORE">
    <property type="method" value="EM"/>
    <property type="resolution" value="2.90 A"/>
    <property type="chains" value="f=1-38"/>
</dbReference>
<dbReference type="PDB" id="6OSK">
    <property type="method" value="EM"/>
    <property type="resolution" value="3.60 A"/>
    <property type="chains" value="f=1-38"/>
</dbReference>
<dbReference type="PDB" id="6OSQ">
    <property type="method" value="EM"/>
    <property type="resolution" value="3.50 A"/>
    <property type="chains" value="f=1-38"/>
</dbReference>
<dbReference type="PDB" id="6OST">
    <property type="method" value="EM"/>
    <property type="resolution" value="4.20 A"/>
    <property type="chains" value="f=1-38"/>
</dbReference>
<dbReference type="PDB" id="6OT3">
    <property type="method" value="EM"/>
    <property type="resolution" value="3.90 A"/>
    <property type="chains" value="f=1-38"/>
</dbReference>
<dbReference type="PDB" id="6OUO">
    <property type="method" value="EM"/>
    <property type="resolution" value="3.70 A"/>
    <property type="chains" value="f=1-38"/>
</dbReference>
<dbReference type="PDB" id="6PJ6">
    <property type="method" value="EM"/>
    <property type="resolution" value="2.20 A"/>
    <property type="chains" value="m=1-38"/>
</dbReference>
<dbReference type="PDB" id="6Q98">
    <property type="method" value="EM"/>
    <property type="resolution" value="4.30 A"/>
    <property type="chains" value="f=1-38"/>
</dbReference>
<dbReference type="PDB" id="6Q9A">
    <property type="method" value="EM"/>
    <property type="resolution" value="3.70 A"/>
    <property type="chains" value="f=1-38"/>
</dbReference>
<dbReference type="PDB" id="6QDW">
    <property type="method" value="EM"/>
    <property type="resolution" value="2.83 A"/>
    <property type="chains" value="8=1-38"/>
</dbReference>
<dbReference type="PDB" id="6QUL">
    <property type="method" value="EM"/>
    <property type="resolution" value="3.00 A"/>
    <property type="chains" value="f=1-38"/>
</dbReference>
<dbReference type="PDB" id="6S0K">
    <property type="method" value="EM"/>
    <property type="resolution" value="3.10 A"/>
    <property type="chains" value="f=1-38"/>
</dbReference>
<dbReference type="PDB" id="6SZS">
    <property type="method" value="EM"/>
    <property type="resolution" value="3.06 A"/>
    <property type="chains" value="4=1-38"/>
</dbReference>
<dbReference type="PDB" id="6TBV">
    <property type="method" value="EM"/>
    <property type="resolution" value="2.70 A"/>
    <property type="chains" value="L361=1-38"/>
</dbReference>
<dbReference type="PDB" id="6TC3">
    <property type="method" value="EM"/>
    <property type="resolution" value="2.70 A"/>
    <property type="chains" value="L361=1-38"/>
</dbReference>
<dbReference type="PDB" id="6U48">
    <property type="method" value="EM"/>
    <property type="resolution" value="2.87 A"/>
    <property type="chains" value="C5=1-38"/>
</dbReference>
<dbReference type="PDB" id="6VU3">
    <property type="method" value="EM"/>
    <property type="resolution" value="3.70 A"/>
    <property type="chains" value="q=1-38"/>
</dbReference>
<dbReference type="PDB" id="6VWL">
    <property type="method" value="EM"/>
    <property type="resolution" value="3.10 A"/>
    <property type="chains" value="AC=1-38"/>
</dbReference>
<dbReference type="PDB" id="6VWM">
    <property type="method" value="EM"/>
    <property type="resolution" value="3.40 A"/>
    <property type="chains" value="AC=1-38"/>
</dbReference>
<dbReference type="PDB" id="6VWN">
    <property type="method" value="EM"/>
    <property type="resolution" value="3.40 A"/>
    <property type="chains" value="AC=1-38"/>
</dbReference>
<dbReference type="PDB" id="6VYQ">
    <property type="method" value="EM"/>
    <property type="resolution" value="3.70 A"/>
    <property type="chains" value="q=1-38"/>
</dbReference>
<dbReference type="PDB" id="6VYR">
    <property type="method" value="EM"/>
    <property type="resolution" value="3.80 A"/>
    <property type="chains" value="q=1-38"/>
</dbReference>
<dbReference type="PDB" id="6VYS">
    <property type="method" value="EM"/>
    <property type="resolution" value="3.70 A"/>
    <property type="chains" value="q=1-38"/>
</dbReference>
<dbReference type="PDB" id="6VYT">
    <property type="method" value="EM"/>
    <property type="resolution" value="14.00 A"/>
    <property type="chains" value="q=1-38"/>
</dbReference>
<dbReference type="PDB" id="6VYU">
    <property type="method" value="EM"/>
    <property type="resolution" value="7.00 A"/>
    <property type="chains" value="q=1-38"/>
</dbReference>
<dbReference type="PDB" id="6VYW">
    <property type="method" value="EM"/>
    <property type="resolution" value="7.00 A"/>
    <property type="chains" value="q=1-38"/>
</dbReference>
<dbReference type="PDB" id="6VYX">
    <property type="method" value="EM"/>
    <property type="resolution" value="9.90 A"/>
    <property type="chains" value="q=1-38"/>
</dbReference>
<dbReference type="PDB" id="6VYY">
    <property type="method" value="EM"/>
    <property type="resolution" value="9.90 A"/>
    <property type="chains" value="q=1-38"/>
</dbReference>
<dbReference type="PDB" id="6VYZ">
    <property type="method" value="EM"/>
    <property type="resolution" value="9.90 A"/>
    <property type="chains" value="q=1-38"/>
</dbReference>
<dbReference type="PDB" id="6VZ2">
    <property type="method" value="EM"/>
    <property type="resolution" value="10.00 A"/>
    <property type="chains" value="q=1-38"/>
</dbReference>
<dbReference type="PDB" id="6VZ3">
    <property type="method" value="EM"/>
    <property type="resolution" value="8.90 A"/>
    <property type="chains" value="q=1-38"/>
</dbReference>
<dbReference type="PDB" id="6VZ5">
    <property type="method" value="EM"/>
    <property type="resolution" value="8.90 A"/>
    <property type="chains" value="q=1-38"/>
</dbReference>
<dbReference type="PDB" id="6VZ7">
    <property type="method" value="EM"/>
    <property type="resolution" value="7.00 A"/>
    <property type="chains" value="q=1-38"/>
</dbReference>
<dbReference type="PDB" id="6VZJ">
    <property type="method" value="EM"/>
    <property type="resolution" value="4.10 A"/>
    <property type="chains" value="q=1-38"/>
</dbReference>
<dbReference type="PDB" id="6WD0">
    <property type="method" value="EM"/>
    <property type="resolution" value="3.00 A"/>
    <property type="chains" value="F=1-38"/>
</dbReference>
<dbReference type="PDB" id="6WD1">
    <property type="method" value="EM"/>
    <property type="resolution" value="3.30 A"/>
    <property type="chains" value="F=1-38"/>
</dbReference>
<dbReference type="PDB" id="6WD2">
    <property type="method" value="EM"/>
    <property type="resolution" value="3.60 A"/>
    <property type="chains" value="F=1-38"/>
</dbReference>
<dbReference type="PDB" id="6WD3">
    <property type="method" value="EM"/>
    <property type="resolution" value="3.60 A"/>
    <property type="chains" value="F=1-38"/>
</dbReference>
<dbReference type="PDB" id="6WD4">
    <property type="method" value="EM"/>
    <property type="resolution" value="3.70 A"/>
    <property type="chains" value="F=1-38"/>
</dbReference>
<dbReference type="PDB" id="6WD5">
    <property type="method" value="EM"/>
    <property type="resolution" value="3.60 A"/>
    <property type="chains" value="F=1-38"/>
</dbReference>
<dbReference type="PDB" id="6WD6">
    <property type="method" value="EM"/>
    <property type="resolution" value="3.70 A"/>
    <property type="chains" value="F=1-38"/>
</dbReference>
<dbReference type="PDB" id="6WD7">
    <property type="method" value="EM"/>
    <property type="resolution" value="3.90 A"/>
    <property type="chains" value="F=1-38"/>
</dbReference>
<dbReference type="PDB" id="6WD8">
    <property type="method" value="EM"/>
    <property type="resolution" value="3.70 A"/>
    <property type="chains" value="F=1-38"/>
</dbReference>
<dbReference type="PDB" id="6WD9">
    <property type="method" value="EM"/>
    <property type="resolution" value="3.70 A"/>
    <property type="chains" value="F=1-38"/>
</dbReference>
<dbReference type="PDB" id="6WDA">
    <property type="method" value="EM"/>
    <property type="resolution" value="3.80 A"/>
    <property type="chains" value="F=1-38"/>
</dbReference>
<dbReference type="PDB" id="6WDB">
    <property type="method" value="EM"/>
    <property type="resolution" value="4.00 A"/>
    <property type="chains" value="F=1-38"/>
</dbReference>
<dbReference type="PDB" id="6WDC">
    <property type="method" value="EM"/>
    <property type="resolution" value="4.20 A"/>
    <property type="chains" value="F=1-38"/>
</dbReference>
<dbReference type="PDB" id="6WDD">
    <property type="method" value="EM"/>
    <property type="resolution" value="3.20 A"/>
    <property type="chains" value="F=1-38"/>
</dbReference>
<dbReference type="PDB" id="6WDE">
    <property type="method" value="EM"/>
    <property type="resolution" value="3.00 A"/>
    <property type="chains" value="F=1-38"/>
</dbReference>
<dbReference type="PDB" id="6WDF">
    <property type="method" value="EM"/>
    <property type="resolution" value="3.30 A"/>
    <property type="chains" value="F=1-38"/>
</dbReference>
<dbReference type="PDB" id="6WDG">
    <property type="method" value="EM"/>
    <property type="resolution" value="3.30 A"/>
    <property type="chains" value="F=1-38"/>
</dbReference>
<dbReference type="PDB" id="6WDH">
    <property type="method" value="EM"/>
    <property type="resolution" value="4.30 A"/>
    <property type="chains" value="F=1-38"/>
</dbReference>
<dbReference type="PDB" id="6WDI">
    <property type="method" value="EM"/>
    <property type="resolution" value="4.00 A"/>
    <property type="chains" value="F=1-38"/>
</dbReference>
<dbReference type="PDB" id="6WDJ">
    <property type="method" value="EM"/>
    <property type="resolution" value="3.70 A"/>
    <property type="chains" value="F=1-38"/>
</dbReference>
<dbReference type="PDB" id="6WDK">
    <property type="method" value="EM"/>
    <property type="resolution" value="3.60 A"/>
    <property type="chains" value="F=1-38"/>
</dbReference>
<dbReference type="PDB" id="6WDL">
    <property type="method" value="EM"/>
    <property type="resolution" value="3.70 A"/>
    <property type="chains" value="F=1-38"/>
</dbReference>
<dbReference type="PDB" id="6WDM">
    <property type="method" value="EM"/>
    <property type="resolution" value="3.60 A"/>
    <property type="chains" value="F=1-38"/>
</dbReference>
<dbReference type="PDB" id="6WNT">
    <property type="method" value="EM"/>
    <property type="resolution" value="3.10 A"/>
    <property type="chains" value="F=1-38"/>
</dbReference>
<dbReference type="PDB" id="6WNV">
    <property type="method" value="EM"/>
    <property type="resolution" value="3.50 A"/>
    <property type="chains" value="F=1-38"/>
</dbReference>
<dbReference type="PDB" id="6WNW">
    <property type="method" value="EM"/>
    <property type="resolution" value="3.20 A"/>
    <property type="chains" value="F=1-38"/>
</dbReference>
<dbReference type="PDB" id="6X6T">
    <property type="method" value="EM"/>
    <property type="resolution" value="3.20 A"/>
    <property type="chains" value="q=1-38"/>
</dbReference>
<dbReference type="PDB" id="6X7F">
    <property type="method" value="EM"/>
    <property type="resolution" value="3.50 A"/>
    <property type="chains" value="q=1-38"/>
</dbReference>
<dbReference type="PDB" id="6X7K">
    <property type="method" value="EM"/>
    <property type="resolution" value="3.10 A"/>
    <property type="chains" value="q=1-38"/>
</dbReference>
<dbReference type="PDB" id="6X9Q">
    <property type="method" value="EM"/>
    <property type="resolution" value="4.80 A"/>
    <property type="chains" value="q=1-38"/>
</dbReference>
<dbReference type="PDB" id="6XDQ">
    <property type="method" value="EM"/>
    <property type="resolution" value="3.70 A"/>
    <property type="chains" value="q=1-38"/>
</dbReference>
<dbReference type="PDB" id="6XDR">
    <property type="method" value="EM"/>
    <property type="resolution" value="4.70 A"/>
    <property type="chains" value="q=1-38"/>
</dbReference>
<dbReference type="PDB" id="6XGF">
    <property type="method" value="EM"/>
    <property type="resolution" value="5.00 A"/>
    <property type="chains" value="q=1-38"/>
</dbReference>
<dbReference type="PDB" id="6XII">
    <property type="method" value="EM"/>
    <property type="resolution" value="7.00 A"/>
    <property type="chains" value="q=1-38"/>
</dbReference>
<dbReference type="PDB" id="6XIJ">
    <property type="method" value="EM"/>
    <property type="resolution" value="8.00 A"/>
    <property type="chains" value="q=1-38"/>
</dbReference>
<dbReference type="PDB" id="6XZ7">
    <property type="method" value="EM"/>
    <property type="resolution" value="2.10 A"/>
    <property type="chains" value="e=1-38"/>
</dbReference>
<dbReference type="PDB" id="6XZA">
    <property type="method" value="EM"/>
    <property type="resolution" value="2.66 A"/>
    <property type="chains" value="e2=1-38"/>
</dbReference>
<dbReference type="PDB" id="6XZB">
    <property type="method" value="EM"/>
    <property type="resolution" value="2.54 A"/>
    <property type="chains" value="e2=1-38"/>
</dbReference>
<dbReference type="PDB" id="6Y69">
    <property type="method" value="EM"/>
    <property type="resolution" value="2.86 A"/>
    <property type="chains" value="4=1-38"/>
</dbReference>
<dbReference type="PDB" id="6YS3">
    <property type="method" value="EM"/>
    <property type="resolution" value="2.58 A"/>
    <property type="chains" value="8=1-38"/>
</dbReference>
<dbReference type="PDB" id="6YSR">
    <property type="method" value="EM"/>
    <property type="resolution" value="3.10 A"/>
    <property type="chains" value="4=1-38"/>
</dbReference>
<dbReference type="PDB" id="6YSS">
    <property type="method" value="EM"/>
    <property type="resolution" value="2.60 A"/>
    <property type="chains" value="4=1-38"/>
</dbReference>
<dbReference type="PDB" id="6YST">
    <property type="method" value="EM"/>
    <property type="resolution" value="3.20 A"/>
    <property type="chains" value="4=1-38"/>
</dbReference>
<dbReference type="PDB" id="6YSU">
    <property type="method" value="EM"/>
    <property type="resolution" value="3.70 A"/>
    <property type="chains" value="4=1-38"/>
</dbReference>
<dbReference type="PDB" id="6ZTJ">
    <property type="method" value="EM"/>
    <property type="resolution" value="3.40 A"/>
    <property type="chains" value="B6=1-38"/>
</dbReference>
<dbReference type="PDB" id="6ZTL">
    <property type="method" value="EM"/>
    <property type="resolution" value="3.50 A"/>
    <property type="chains" value="B6=1-38"/>
</dbReference>
<dbReference type="PDB" id="6ZTM">
    <property type="method" value="EM"/>
    <property type="resolution" value="3.30 A"/>
    <property type="chains" value="B6=1-38"/>
</dbReference>
<dbReference type="PDB" id="6ZTN">
    <property type="method" value="EM"/>
    <property type="resolution" value="3.90 A"/>
    <property type="chains" value="B6=1-38"/>
</dbReference>
<dbReference type="PDB" id="6ZTO">
    <property type="method" value="EM"/>
    <property type="resolution" value="3.00 A"/>
    <property type="chains" value="B6=1-38"/>
</dbReference>
<dbReference type="PDB" id="6ZTP">
    <property type="method" value="EM"/>
    <property type="resolution" value="3.00 A"/>
    <property type="chains" value="B6=1-38"/>
</dbReference>
<dbReference type="PDB" id="6ZU1">
    <property type="method" value="EM"/>
    <property type="resolution" value="3.00 A"/>
    <property type="chains" value="B6=1-38"/>
</dbReference>
<dbReference type="PDB" id="7ABZ">
    <property type="method" value="EM"/>
    <property type="resolution" value="3.21 A"/>
    <property type="chains" value="f=1-38"/>
</dbReference>
<dbReference type="PDB" id="7AC7">
    <property type="method" value="EM"/>
    <property type="resolution" value="3.08 A"/>
    <property type="chains" value="f=1-37"/>
</dbReference>
<dbReference type="PDB" id="7ACJ">
    <property type="method" value="EM"/>
    <property type="resolution" value="3.20 A"/>
    <property type="chains" value="f=1-38"/>
</dbReference>
<dbReference type="PDB" id="7ACR">
    <property type="method" value="EM"/>
    <property type="resolution" value="3.44 A"/>
    <property type="chains" value="f=1-38"/>
</dbReference>
<dbReference type="PDB" id="7B5K">
    <property type="method" value="EM"/>
    <property type="resolution" value="2.90 A"/>
    <property type="chains" value="4=1-38"/>
</dbReference>
<dbReference type="PDB" id="7BL4">
    <property type="method" value="EM"/>
    <property type="resolution" value="2.40 A"/>
    <property type="chains" value="g=1-38"/>
</dbReference>
<dbReference type="PDB" id="7BL6">
    <property type="method" value="EM"/>
    <property type="resolution" value="4.00 A"/>
    <property type="chains" value="g=1-38"/>
</dbReference>
<dbReference type="PDB" id="7BV8">
    <property type="method" value="EM"/>
    <property type="resolution" value="3.14 A"/>
    <property type="chains" value="f=1-38"/>
</dbReference>
<dbReference type="PDB" id="7D6Z">
    <property type="method" value="EM"/>
    <property type="resolution" value="3.40 A"/>
    <property type="chains" value="e=1-38"/>
</dbReference>
<dbReference type="PDB" id="7D80">
    <property type="method" value="EM"/>
    <property type="resolution" value="4.10 A"/>
    <property type="chains" value="2=1-38"/>
</dbReference>
<dbReference type="PDB" id="7JSS">
    <property type="method" value="EM"/>
    <property type="resolution" value="3.70 A"/>
    <property type="chains" value="F=1-38"/>
</dbReference>
<dbReference type="PDB" id="7JSW">
    <property type="method" value="EM"/>
    <property type="resolution" value="3.80 A"/>
    <property type="chains" value="F=1-38"/>
</dbReference>
<dbReference type="PDB" id="7JSZ">
    <property type="method" value="EM"/>
    <property type="resolution" value="3.70 A"/>
    <property type="chains" value="F=1-38"/>
</dbReference>
<dbReference type="PDB" id="7JT1">
    <property type="method" value="EM"/>
    <property type="resolution" value="3.30 A"/>
    <property type="chains" value="F=1-38"/>
</dbReference>
<dbReference type="PDB" id="7JT2">
    <property type="method" value="EM"/>
    <property type="resolution" value="3.50 A"/>
    <property type="chains" value="F=1-38"/>
</dbReference>
<dbReference type="PDB" id="7JT3">
    <property type="method" value="EM"/>
    <property type="resolution" value="3.70 A"/>
    <property type="chains" value="F=1-38"/>
</dbReference>
<dbReference type="PDB" id="7K00">
    <property type="method" value="EM"/>
    <property type="resolution" value="1.98 A"/>
    <property type="chains" value="3=1-38"/>
</dbReference>
<dbReference type="PDB" id="7K50">
    <property type="method" value="EM"/>
    <property type="resolution" value="3.40 A"/>
    <property type="chains" value="F=1-38"/>
</dbReference>
<dbReference type="PDB" id="7K51">
    <property type="method" value="EM"/>
    <property type="resolution" value="3.50 A"/>
    <property type="chains" value="F=1-38"/>
</dbReference>
<dbReference type="PDB" id="7K52">
    <property type="method" value="EM"/>
    <property type="resolution" value="3.40 A"/>
    <property type="chains" value="F=1-38"/>
</dbReference>
<dbReference type="PDB" id="7K53">
    <property type="method" value="EM"/>
    <property type="resolution" value="3.20 A"/>
    <property type="chains" value="F=1-38"/>
</dbReference>
<dbReference type="PDB" id="7K54">
    <property type="method" value="EM"/>
    <property type="resolution" value="3.20 A"/>
    <property type="chains" value="F=1-38"/>
</dbReference>
<dbReference type="PDB" id="7K55">
    <property type="method" value="EM"/>
    <property type="resolution" value="3.30 A"/>
    <property type="chains" value="F=1-38"/>
</dbReference>
<dbReference type="PDB" id="7LV0">
    <property type="method" value="EM"/>
    <property type="resolution" value="3.20 A"/>
    <property type="chains" value="F=1-38"/>
</dbReference>
<dbReference type="PDB" id="7LVK">
    <property type="method" value="EM"/>
    <property type="resolution" value="2.20 A"/>
    <property type="chains" value="m=1-38"/>
</dbReference>
<dbReference type="PDB" id="7M5D">
    <property type="method" value="EM"/>
    <property type="resolution" value="2.80 A"/>
    <property type="chains" value="f=1-38"/>
</dbReference>
<dbReference type="PDB" id="7N1P">
    <property type="method" value="EM"/>
    <property type="resolution" value="2.33 A"/>
    <property type="chains" value="Lj=1-38"/>
</dbReference>
<dbReference type="PDB" id="7N2C">
    <property type="method" value="EM"/>
    <property type="resolution" value="2.72 A"/>
    <property type="chains" value="Lj=1-38"/>
</dbReference>
<dbReference type="PDB" id="7N2U">
    <property type="method" value="EM"/>
    <property type="resolution" value="2.53 A"/>
    <property type="chains" value="Lj=1-38"/>
</dbReference>
<dbReference type="PDB" id="7N2V">
    <property type="method" value="EM"/>
    <property type="resolution" value="2.54 A"/>
    <property type="chains" value="Lj=1-38"/>
</dbReference>
<dbReference type="PDB" id="7N30">
    <property type="method" value="EM"/>
    <property type="resolution" value="2.66 A"/>
    <property type="chains" value="Lj=1-38"/>
</dbReference>
<dbReference type="PDB" id="7N31">
    <property type="method" value="EM"/>
    <property type="resolution" value="2.69 A"/>
    <property type="chains" value="Lj=1-38"/>
</dbReference>
<dbReference type="PDB" id="7NBU">
    <property type="method" value="EM"/>
    <property type="resolution" value="3.11 A"/>
    <property type="chains" value="3=1-38"/>
</dbReference>
<dbReference type="PDB" id="7NSO">
    <property type="method" value="EM"/>
    <property type="resolution" value="2.90 A"/>
    <property type="chains" value="4=1-38"/>
</dbReference>
<dbReference type="PDB" id="7NSP">
    <property type="method" value="EM"/>
    <property type="resolution" value="3.50 A"/>
    <property type="chains" value="4=1-38"/>
</dbReference>
<dbReference type="PDB" id="7NSQ">
    <property type="method" value="EM"/>
    <property type="resolution" value="3.10 A"/>
    <property type="chains" value="4=1-38"/>
</dbReference>
<dbReference type="PDB" id="7NWT">
    <property type="method" value="EM"/>
    <property type="resolution" value="2.66 A"/>
    <property type="chains" value="f=1-38"/>
</dbReference>
<dbReference type="PDB" id="7NWW">
    <property type="method" value="EM"/>
    <property type="resolution" value="3.05 A"/>
    <property type="chains" value="e=1-38"/>
</dbReference>
<dbReference type="PDB" id="7O19">
    <property type="method" value="EM"/>
    <property type="resolution" value="2.90 A"/>
    <property type="chains" value="B4=1-38"/>
</dbReference>
<dbReference type="PDB" id="7O1A">
    <property type="method" value="EM"/>
    <property type="resolution" value="2.40 A"/>
    <property type="chains" value="B4=1-38"/>
</dbReference>
<dbReference type="PDB" id="7O1C">
    <property type="method" value="EM"/>
    <property type="resolution" value="2.60 A"/>
    <property type="chains" value="B4=1-38"/>
</dbReference>
<dbReference type="PDB" id="7OIF">
    <property type="method" value="EM"/>
    <property type="resolution" value="3.00 A"/>
    <property type="chains" value="e=1-38"/>
</dbReference>
<dbReference type="PDB" id="7OIG">
    <property type="method" value="EM"/>
    <property type="resolution" value="3.20 A"/>
    <property type="chains" value="e=1-38"/>
</dbReference>
<dbReference type="PDB" id="7OII">
    <property type="method" value="EM"/>
    <property type="resolution" value="3.00 A"/>
    <property type="chains" value="e=1-38"/>
</dbReference>
<dbReference type="PDB" id="7OIZ">
    <property type="method" value="EM"/>
    <property type="resolution" value="2.90 A"/>
    <property type="chains" value="3=1-38"/>
</dbReference>
<dbReference type="PDB" id="7OJ0">
    <property type="method" value="EM"/>
    <property type="resolution" value="3.50 A"/>
    <property type="chains" value="3=1-38"/>
</dbReference>
<dbReference type="PDB" id="7OT5">
    <property type="method" value="EM"/>
    <property type="resolution" value="2.90 A"/>
    <property type="chains" value="e=1-38"/>
</dbReference>
<dbReference type="PDB" id="7P3K">
    <property type="method" value="EM"/>
    <property type="resolution" value="2.90 A"/>
    <property type="chains" value="3=1-38"/>
</dbReference>
<dbReference type="PDB" id="7PJS">
    <property type="method" value="EM"/>
    <property type="resolution" value="2.35 A"/>
    <property type="chains" value="4=1-38"/>
</dbReference>
<dbReference type="PDB" id="7PJT">
    <property type="method" value="EM"/>
    <property type="resolution" value="6.00 A"/>
    <property type="chains" value="4=1-38"/>
</dbReference>
<dbReference type="PDB" id="7PJU">
    <property type="method" value="EM"/>
    <property type="resolution" value="9.50 A"/>
    <property type="chains" value="4=1-38"/>
</dbReference>
<dbReference type="PDB" id="7PJV">
    <property type="method" value="EM"/>
    <property type="resolution" value="3.10 A"/>
    <property type="chains" value="4=1-38"/>
</dbReference>
<dbReference type="PDB" id="7PJW">
    <property type="method" value="EM"/>
    <property type="resolution" value="4.00 A"/>
    <property type="chains" value="4=1-38"/>
</dbReference>
<dbReference type="PDB" id="7PJX">
    <property type="method" value="EM"/>
    <property type="resolution" value="6.50 A"/>
    <property type="chains" value="4=1-38"/>
</dbReference>
<dbReference type="PDB" id="7PJY">
    <property type="method" value="EM"/>
    <property type="resolution" value="3.10 A"/>
    <property type="chains" value="4=1-38"/>
</dbReference>
<dbReference type="PDB" id="7PJZ">
    <property type="method" value="EM"/>
    <property type="resolution" value="6.00 A"/>
    <property type="chains" value="4=1-38"/>
</dbReference>
<dbReference type="PDB" id="7Q4K">
    <property type="method" value="EM"/>
    <property type="resolution" value="3.00 A"/>
    <property type="chains" value="B4=1-38"/>
</dbReference>
<dbReference type="PDB" id="7QGN">
    <property type="method" value="EM"/>
    <property type="resolution" value="3.37 A"/>
    <property type="chains" value="r=1-38"/>
</dbReference>
<dbReference type="PDB" id="7QGR">
    <property type="method" value="EM"/>
    <property type="resolution" value="5.70 A"/>
    <property type="chains" value="r=1-38"/>
</dbReference>
<dbReference type="PDB" id="7QQ3">
    <property type="method" value="EM"/>
    <property type="resolution" value="2.10 A"/>
    <property type="chains" value="m=1-38"/>
</dbReference>
<dbReference type="PDB" id="7S1G">
    <property type="method" value="EM"/>
    <property type="resolution" value="2.48 A"/>
    <property type="chains" value="m=1-38"/>
</dbReference>
<dbReference type="PDB" id="7S1H">
    <property type="method" value="EM"/>
    <property type="resolution" value="2.35 A"/>
    <property type="chains" value="m=1-38"/>
</dbReference>
<dbReference type="PDB" id="7S1I">
    <property type="method" value="EM"/>
    <property type="resolution" value="2.48 A"/>
    <property type="chains" value="m=1-38"/>
</dbReference>
<dbReference type="PDB" id="7S1J">
    <property type="method" value="EM"/>
    <property type="resolution" value="2.47 A"/>
    <property type="chains" value="m=1-38"/>
</dbReference>
<dbReference type="PDB" id="7S1K">
    <property type="method" value="EM"/>
    <property type="resolution" value="2.42 A"/>
    <property type="chains" value="m=1-38"/>
</dbReference>
<dbReference type="PDB" id="7SA4">
    <property type="method" value="EM"/>
    <property type="resolution" value="2.55 A"/>
    <property type="chains" value="f=1-38"/>
</dbReference>
<dbReference type="PDB" id="7SS9">
    <property type="method" value="EM"/>
    <property type="resolution" value="3.90 A"/>
    <property type="chains" value="F=1-38"/>
</dbReference>
<dbReference type="PDB" id="7SSD">
    <property type="method" value="EM"/>
    <property type="resolution" value="3.30 A"/>
    <property type="chains" value="F=1-38"/>
</dbReference>
<dbReference type="PDB" id="7SSL">
    <property type="method" value="EM"/>
    <property type="resolution" value="3.80 A"/>
    <property type="chains" value="F=1-38"/>
</dbReference>
<dbReference type="PDB" id="7SSN">
    <property type="method" value="EM"/>
    <property type="resolution" value="3.20 A"/>
    <property type="chains" value="F=1-38"/>
</dbReference>
<dbReference type="PDB" id="7SSO">
    <property type="method" value="EM"/>
    <property type="resolution" value="3.20 A"/>
    <property type="chains" value="F=1-38"/>
</dbReference>
<dbReference type="PDB" id="7SSW">
    <property type="method" value="EM"/>
    <property type="resolution" value="3.80 A"/>
    <property type="chains" value="F=1-38"/>
</dbReference>
<dbReference type="PDB" id="7ST2">
    <property type="method" value="EM"/>
    <property type="resolution" value="2.90 A"/>
    <property type="chains" value="F=1-38"/>
</dbReference>
<dbReference type="PDB" id="7ST6">
    <property type="method" value="EM"/>
    <property type="resolution" value="3.00 A"/>
    <property type="chains" value="F=1-38"/>
</dbReference>
<dbReference type="PDB" id="7ST7">
    <property type="method" value="EM"/>
    <property type="resolution" value="3.20 A"/>
    <property type="chains" value="F=1-38"/>
</dbReference>
<dbReference type="PDB" id="7TOS">
    <property type="method" value="EM"/>
    <property type="resolution" value="2.90 A"/>
    <property type="chains" value="L36=1-38"/>
</dbReference>
<dbReference type="PDB" id="7UG7">
    <property type="method" value="EM"/>
    <property type="resolution" value="2.58 A"/>
    <property type="chains" value="Lj=1-38"/>
</dbReference>
<dbReference type="PDB" id="7UPH">
    <property type="method" value="EM"/>
    <property type="resolution" value="4.18 A"/>
    <property type="chains" value="m=1-38"/>
</dbReference>
<dbReference type="PDB" id="7Y7C">
    <property type="method" value="EM"/>
    <property type="resolution" value="2.51 A"/>
    <property type="chains" value="3=1-38"/>
</dbReference>
<dbReference type="PDB" id="7Y7D">
    <property type="method" value="EM"/>
    <property type="resolution" value="2.58 A"/>
    <property type="chains" value="3=1-38"/>
</dbReference>
<dbReference type="PDB" id="7Y7E">
    <property type="method" value="EM"/>
    <property type="resolution" value="2.41 A"/>
    <property type="chains" value="3=1-38"/>
</dbReference>
<dbReference type="PDB" id="7Y7F">
    <property type="method" value="EM"/>
    <property type="resolution" value="2.43 A"/>
    <property type="chains" value="3=1-38"/>
</dbReference>
<dbReference type="PDB" id="7Y7G">
    <property type="method" value="EM"/>
    <property type="resolution" value="2.34 A"/>
    <property type="chains" value="3=1-38"/>
</dbReference>
<dbReference type="PDB" id="7Y7H">
    <property type="method" value="EM"/>
    <property type="resolution" value="2.51 A"/>
    <property type="chains" value="3=1-38"/>
</dbReference>
<dbReference type="PDB" id="7YLA">
    <property type="method" value="EM"/>
    <property type="resolution" value="2.52 A"/>
    <property type="chains" value="m=1-38"/>
</dbReference>
<dbReference type="PDB" id="7ZQ5">
    <property type="method" value="EM"/>
    <property type="resolution" value="2.70 A"/>
    <property type="chains" value="8=1-38"/>
</dbReference>
<dbReference type="PDB" id="7ZTA">
    <property type="method" value="EM"/>
    <property type="resolution" value="2.70 A"/>
    <property type="chains" value="L361=1-38"/>
</dbReference>
<dbReference type="PDB" id="8A3L">
    <property type="method" value="EM"/>
    <property type="resolution" value="3.42 A"/>
    <property type="chains" value="3=1-38"/>
</dbReference>
<dbReference type="PDB" id="8AKN">
    <property type="method" value="EM"/>
    <property type="resolution" value="2.30 A"/>
    <property type="chains" value="3=1-38"/>
</dbReference>
<dbReference type="PDB" id="8AM9">
    <property type="method" value="EM"/>
    <property type="resolution" value="2.80 A"/>
    <property type="chains" value="3=1-38"/>
</dbReference>
<dbReference type="PDB" id="8ANA">
    <property type="method" value="EM"/>
    <property type="resolution" value="2.10 A"/>
    <property type="chains" value="3=1-38"/>
</dbReference>
<dbReference type="PDB" id="8AP4">
    <property type="method" value="EM"/>
    <property type="resolution" value="3.00 A"/>
    <property type="chains" value="3=1-38"/>
</dbReference>
<dbReference type="PDB" id="8AYE">
    <property type="method" value="EM"/>
    <property type="resolution" value="1.96 A"/>
    <property type="chains" value="3=1-38"/>
</dbReference>
<dbReference type="PDB" id="8B0X">
    <property type="method" value="EM"/>
    <property type="resolution" value="1.55 A"/>
    <property type="chains" value="3=1-38"/>
</dbReference>
<dbReference type="PDB" id="8B7Y">
    <property type="method" value="EM"/>
    <property type="resolution" value="3.00 A"/>
    <property type="chains" value="m=1-38"/>
</dbReference>
<dbReference type="PDB" id="8BF7">
    <property type="method" value="EM"/>
    <property type="resolution" value="2.33 A"/>
    <property type="chains" value="e=1-38"/>
</dbReference>
<dbReference type="PDB" id="8BGE">
    <property type="method" value="EM"/>
    <property type="resolution" value="2.11 A"/>
    <property type="chains" value="e=1-38"/>
</dbReference>
<dbReference type="PDB" id="8BGH">
    <property type="method" value="EM"/>
    <property type="resolution" value="2.88 A"/>
    <property type="chains" value="e=1-38"/>
</dbReference>
<dbReference type="PDB" id="8BH4">
    <property type="method" value="EM"/>
    <property type="resolution" value="2.62 A"/>
    <property type="chains" value="e=1-38"/>
</dbReference>
<dbReference type="PDB" id="8BHJ">
    <property type="method" value="EM"/>
    <property type="resolution" value="2.81 A"/>
    <property type="chains" value="e=1-38"/>
</dbReference>
<dbReference type="PDB" id="8BHL">
    <property type="method" value="EM"/>
    <property type="resolution" value="2.21 A"/>
    <property type="chains" value="e=1-38"/>
</dbReference>
<dbReference type="PDB" id="8BHN">
    <property type="method" value="EM"/>
    <property type="resolution" value="2.85 A"/>
    <property type="chains" value="e=1-38"/>
</dbReference>
<dbReference type="PDB" id="8BHP">
    <property type="method" value="EM"/>
    <property type="resolution" value="2.37 A"/>
    <property type="chains" value="e=1-38"/>
</dbReference>
<dbReference type="PDB" id="8BIL">
    <property type="method" value="EM"/>
    <property type="resolution" value="2.04 A"/>
    <property type="chains" value="e=1-38"/>
</dbReference>
<dbReference type="PDB" id="8BIM">
    <property type="method" value="EM"/>
    <property type="resolution" value="2.04 A"/>
    <property type="chains" value="e=1-38"/>
</dbReference>
<dbReference type="PDB" id="8CAM">
    <property type="method" value="EM"/>
    <property type="resolution" value="1.86 A"/>
    <property type="chains" value="3=1-38"/>
</dbReference>
<dbReference type="PDB" id="8CEU">
    <property type="method" value="EM"/>
    <property type="resolution" value="1.83 A"/>
    <property type="chains" value="3=1-38"/>
</dbReference>
<dbReference type="PDB" id="8CGD">
    <property type="method" value="EM"/>
    <property type="resolution" value="1.98 A"/>
    <property type="chains" value="3=1-38"/>
</dbReference>
<dbReference type="PDB" id="8CGK">
    <property type="method" value="EM"/>
    <property type="resolution" value="1.64 A"/>
    <property type="chains" value="3=1-38"/>
</dbReference>
<dbReference type="PDB" id="8CGV">
    <property type="method" value="EM"/>
    <property type="resolution" value="1.66 A"/>
    <property type="chains" value="3=1-38"/>
</dbReference>
<dbReference type="PDB" id="8EIU">
    <property type="method" value="EM"/>
    <property type="resolution" value="2.24 A"/>
    <property type="chains" value="3=1-38"/>
</dbReference>
<dbReference type="PDB" id="8EKC">
    <property type="method" value="EM"/>
    <property type="resolution" value="2.70 A"/>
    <property type="chains" value="8=1-38"/>
</dbReference>
<dbReference type="PDB" id="8EMM">
    <property type="method" value="EM"/>
    <property type="resolution" value="2.10 A"/>
    <property type="chains" value="3=1-38"/>
</dbReference>
<dbReference type="PDB" id="8FIZ">
    <property type="method" value="EM"/>
    <property type="resolution" value="3.80 A"/>
    <property type="chains" value="BP=1-38"/>
</dbReference>
<dbReference type="PDB" id="8FTO">
    <property type="method" value="EM"/>
    <property type="resolution" value="1.85 A"/>
    <property type="chains" value="3=1-38"/>
</dbReference>
<dbReference type="PDB" id="8FZD">
    <property type="method" value="EM"/>
    <property type="resolution" value="3.10 A"/>
    <property type="chains" value="8=1-38"/>
</dbReference>
<dbReference type="PDB" id="8FZE">
    <property type="method" value="EM"/>
    <property type="resolution" value="3.00 A"/>
    <property type="chains" value="8=1-38"/>
</dbReference>
<dbReference type="PDB" id="8FZF">
    <property type="method" value="EM"/>
    <property type="resolution" value="3.20 A"/>
    <property type="chains" value="8=1-38"/>
</dbReference>
<dbReference type="PDB" id="8FZG">
    <property type="method" value="EM"/>
    <property type="resolution" value="3.10 A"/>
    <property type="chains" value="8=1-38"/>
</dbReference>
<dbReference type="PDB" id="8FZH">
    <property type="method" value="EM"/>
    <property type="resolution" value="2.90 A"/>
    <property type="chains" value="8=1-38"/>
</dbReference>
<dbReference type="PDB" id="8FZI">
    <property type="method" value="EM"/>
    <property type="resolution" value="3.10 A"/>
    <property type="chains" value="8=1-38"/>
</dbReference>
<dbReference type="PDB" id="8FZJ">
    <property type="method" value="EM"/>
    <property type="resolution" value="3.00 A"/>
    <property type="chains" value="8=1-38"/>
</dbReference>
<dbReference type="PDB" id="8G2U">
    <property type="method" value="EM"/>
    <property type="resolution" value="3.00 A"/>
    <property type="chains" value="4=1-38"/>
</dbReference>
<dbReference type="PDB" id="8G31">
    <property type="method" value="EM"/>
    <property type="resolution" value="3.20 A"/>
    <property type="chains" value="4=1-38"/>
</dbReference>
<dbReference type="PDB" id="8G34">
    <property type="method" value="EM"/>
    <property type="resolution" value="3.20 A"/>
    <property type="chains" value="4=1-38"/>
</dbReference>
<dbReference type="PDB" id="8G38">
    <property type="method" value="EM"/>
    <property type="resolution" value="3.20 A"/>
    <property type="chains" value="4=1-38"/>
</dbReference>
<dbReference type="PDB" id="8G6W">
    <property type="method" value="EM"/>
    <property type="resolution" value="2.02 A"/>
    <property type="chains" value="3=1-38"/>
</dbReference>
<dbReference type="PDB" id="8G6X">
    <property type="method" value="EM"/>
    <property type="resolution" value="2.31 A"/>
    <property type="chains" value="3=1-38"/>
</dbReference>
<dbReference type="PDB" id="8G6Y">
    <property type="method" value="EM"/>
    <property type="resolution" value="2.09 A"/>
    <property type="chains" value="3=1-38"/>
</dbReference>
<dbReference type="PDB" id="8G7P">
    <property type="method" value="EM"/>
    <property type="resolution" value="2.90 A"/>
    <property type="chains" value="8=1-38"/>
</dbReference>
<dbReference type="PDB" id="8G7Q">
    <property type="method" value="EM"/>
    <property type="resolution" value="3.10 A"/>
    <property type="chains" value="8=1-38"/>
</dbReference>
<dbReference type="PDB" id="8G7R">
    <property type="method" value="EM"/>
    <property type="resolution" value="2.80 A"/>
    <property type="chains" value="8=1-38"/>
</dbReference>
<dbReference type="PDB" id="8G7S">
    <property type="method" value="EM"/>
    <property type="resolution" value="3.10 A"/>
    <property type="chains" value="8=1-38"/>
</dbReference>
<dbReference type="PDB" id="8HSP">
    <property type="method" value="EM"/>
    <property type="resolution" value="2.32 A"/>
    <property type="chains" value="3=1-38"/>
</dbReference>
<dbReference type="PDB" id="8HTZ">
    <property type="method" value="EM"/>
    <property type="resolution" value="2.40 A"/>
    <property type="chains" value="3=1-38"/>
</dbReference>
<dbReference type="PDB" id="8HU1">
    <property type="method" value="EM"/>
    <property type="resolution" value="2.69 A"/>
    <property type="chains" value="3=1-38"/>
</dbReference>
<dbReference type="PDB" id="8IFB">
    <property type="method" value="EM"/>
    <property type="resolution" value="2.43 A"/>
    <property type="chains" value="3=1-38"/>
</dbReference>
<dbReference type="PDB" id="8IFC">
    <property type="method" value="EM"/>
    <property type="resolution" value="2.90 A"/>
    <property type="chains" value="3=1-38"/>
</dbReference>
<dbReference type="PDB" id="8P16">
    <property type="method" value="EM"/>
    <property type="resolution" value="2.77 A"/>
    <property type="chains" value="f=1-38"/>
</dbReference>
<dbReference type="PDB" id="8P17">
    <property type="method" value="EM"/>
    <property type="resolution" value="2.78 A"/>
    <property type="chains" value="f=1-38"/>
</dbReference>
<dbReference type="PDB" id="8P18">
    <property type="method" value="EM"/>
    <property type="resolution" value="2.77 A"/>
    <property type="chains" value="f=1-38"/>
</dbReference>
<dbReference type="PDB" id="8PEG">
    <property type="method" value="EM"/>
    <property type="resolution" value="3.30 A"/>
    <property type="chains" value="0=1-38"/>
</dbReference>
<dbReference type="PDB" id="8PHJ">
    <property type="method" value="EM"/>
    <property type="resolution" value="3.67 A"/>
    <property type="chains" value="3=1-38"/>
</dbReference>
<dbReference type="PDB" id="8PKL">
    <property type="method" value="EM"/>
    <property type="resolution" value="3.09 A"/>
    <property type="chains" value="0=1-38"/>
</dbReference>
<dbReference type="PDB" id="8PVA">
    <property type="method" value="EM"/>
    <property type="resolution" value="4.50 A"/>
    <property type="chains" value="3=1-38"/>
</dbReference>
<dbReference type="PDB" id="8Q4F">
    <property type="method" value="EM"/>
    <property type="resolution" value="3.10 A"/>
    <property type="chains" value="3=1-38"/>
</dbReference>
<dbReference type="PDB" id="8QBT">
    <property type="method" value="EM"/>
    <property type="resolution" value="2.20 A"/>
    <property type="chains" value="e=1-38"/>
</dbReference>
<dbReference type="PDB" id="8QK7">
    <property type="method" value="EM"/>
    <property type="resolution" value="2.77 A"/>
    <property type="chains" value="f=1-38"/>
</dbReference>
<dbReference type="PDB" id="8QOA">
    <property type="method" value="EM"/>
    <property type="resolution" value="2.00 A"/>
    <property type="chains" value="3=1-38"/>
</dbReference>
<dbReference type="PDB" id="8R6C">
    <property type="method" value="EM"/>
    <property type="resolution" value="2.20 A"/>
    <property type="chains" value="3=1-38"/>
</dbReference>
<dbReference type="PDB" id="8R8M">
    <property type="method" value="EM"/>
    <property type="resolution" value="2.40 A"/>
    <property type="chains" value="3=1-38"/>
</dbReference>
<dbReference type="PDB" id="8RPY">
    <property type="method" value="EM"/>
    <property type="resolution" value="2.64 A"/>
    <property type="chains" value="4=1-38"/>
</dbReference>
<dbReference type="PDB" id="8RPZ">
    <property type="method" value="EM"/>
    <property type="resolution" value="2.44 A"/>
    <property type="chains" value="4=1-38"/>
</dbReference>
<dbReference type="PDB" id="8RQ0">
    <property type="method" value="EM"/>
    <property type="resolution" value="2.44 A"/>
    <property type="chains" value="4=1-38"/>
</dbReference>
<dbReference type="PDB" id="8RQ2">
    <property type="method" value="EM"/>
    <property type="resolution" value="2.44 A"/>
    <property type="chains" value="4=1-38"/>
</dbReference>
<dbReference type="PDB" id="8SYL">
    <property type="method" value="EM"/>
    <property type="resolution" value="2.90 A"/>
    <property type="chains" value="8=1-38"/>
</dbReference>
<dbReference type="PDB" id="8T5D">
    <property type="method" value="EM"/>
    <property type="resolution" value="3.20 A"/>
    <property type="chains" value="4=1-38"/>
</dbReference>
<dbReference type="PDB" id="8T5H">
    <property type="method" value="EM"/>
    <property type="resolution" value="3.30 A"/>
    <property type="chains" value="4=1-38"/>
</dbReference>
<dbReference type="PDB" id="8VS9">
    <property type="method" value="EM"/>
    <property type="resolution" value="3.90 A"/>
    <property type="chains" value="L36=1-38"/>
</dbReference>
<dbReference type="PDB" id="8VSA">
    <property type="method" value="EM"/>
    <property type="resolution" value="3.70 A"/>
    <property type="chains" value="L36=1-38"/>
</dbReference>
<dbReference type="PDB" id="8W51">
    <property type="method" value="EM"/>
    <property type="resolution" value="2.40 A"/>
    <property type="chains" value="5=1-38"/>
</dbReference>
<dbReference type="PDB" id="8YUO">
    <property type="method" value="EM"/>
    <property type="resolution" value="2.25 A"/>
    <property type="chains" value="3=1-38"/>
</dbReference>
<dbReference type="PDB" id="8YUP">
    <property type="method" value="EM"/>
    <property type="resolution" value="2.39 A"/>
    <property type="chains" value="3=1-38"/>
</dbReference>
<dbReference type="PDB" id="8YUQ">
    <property type="method" value="EM"/>
    <property type="resolution" value="2.41 A"/>
    <property type="chains" value="3=1-38"/>
</dbReference>
<dbReference type="PDB" id="8YUR">
    <property type="method" value="EM"/>
    <property type="resolution" value="2.47 A"/>
    <property type="chains" value="3=1-38"/>
</dbReference>
<dbReference type="PDB" id="8YUS">
    <property type="method" value="EM"/>
    <property type="resolution" value="2.43 A"/>
    <property type="chains" value="3=1-38"/>
</dbReference>
<dbReference type="PDB" id="9D89">
    <property type="method" value="EM"/>
    <property type="resolution" value="1.95 A"/>
    <property type="chains" value="C=1-38"/>
</dbReference>
<dbReference type="PDB" id="9FBV">
    <property type="method" value="EM"/>
    <property type="resolution" value="2.40 A"/>
    <property type="chains" value="3=1-38"/>
</dbReference>
<dbReference type="PDB" id="9GFT">
    <property type="method" value="EM"/>
    <property type="resolution" value="3.10 A"/>
    <property type="chains" value="Az/r=1-38"/>
</dbReference>
<dbReference type="PDB" id="9GGR">
    <property type="method" value="EM"/>
    <property type="resolution" value="3.20 A"/>
    <property type="chains" value="Az/r=1-38"/>
</dbReference>
<dbReference type="PDB" id="9GR1">
    <property type="method" value="EM"/>
    <property type="resolution" value="3.17 A"/>
    <property type="chains" value="3=1-38"/>
</dbReference>
<dbReference type="PDB" id="9H3O">
    <property type="method" value="EM"/>
    <property type="resolution" value="4.54 A"/>
    <property type="chains" value="4=1-38"/>
</dbReference>
<dbReference type="PDB" id="9H3Q">
    <property type="method" value="EM"/>
    <property type="resolution" value="4.02 A"/>
    <property type="chains" value="4=1-38"/>
</dbReference>
<dbReference type="PDB" id="9H3R">
    <property type="method" value="EM"/>
    <property type="resolution" value="4.12 A"/>
    <property type="chains" value="4=1-38"/>
</dbReference>
<dbReference type="PDB" id="9H3S">
    <property type="method" value="EM"/>
    <property type="resolution" value="4.16 A"/>
    <property type="chains" value="4=1-38"/>
</dbReference>
<dbReference type="PDB" id="9H3Y">
    <property type="method" value="EM"/>
    <property type="resolution" value="3.09 A"/>
    <property type="chains" value="4=1-38"/>
</dbReference>
<dbReference type="PDB" id="9H3Z">
    <property type="method" value="EM"/>
    <property type="resolution" value="2.98 A"/>
    <property type="chains" value="4=1-38"/>
</dbReference>
<dbReference type="PDB" id="9HA6">
    <property type="method" value="EM"/>
    <property type="resolution" value="3.08 A"/>
    <property type="chains" value="4=1-38"/>
</dbReference>
<dbReference type="PDB" id="9MOR">
    <property type="method" value="EM"/>
    <property type="resolution" value="2.65 A"/>
    <property type="chains" value="f=1-38"/>
</dbReference>
<dbReference type="PDB" id="9MQ4">
    <property type="method" value="EM"/>
    <property type="resolution" value="2.78 A"/>
    <property type="chains" value="f=1-38"/>
</dbReference>
<dbReference type="PDBsum" id="2J28"/>
<dbReference type="PDBsum" id="2RDO"/>
<dbReference type="PDBsum" id="3BBX"/>
<dbReference type="PDBsum" id="3J5L"/>
<dbReference type="PDBsum" id="3J7Z"/>
<dbReference type="PDBsum" id="3J8G"/>
<dbReference type="PDBsum" id="3J9Y"/>
<dbReference type="PDBsum" id="3J9Z"/>
<dbReference type="PDBsum" id="3JA1"/>
<dbReference type="PDBsum" id="3JBU"/>
<dbReference type="PDBsum" id="3JBV"/>
<dbReference type="PDBsum" id="3JCD"/>
<dbReference type="PDBsum" id="3JCE"/>
<dbReference type="PDBsum" id="3JCJ"/>
<dbReference type="PDBsum" id="3JCN"/>
<dbReference type="PDBsum" id="4CSU"/>
<dbReference type="PDBsum" id="4U1U"/>
<dbReference type="PDBsum" id="4U1V"/>
<dbReference type="PDBsum" id="4U20"/>
<dbReference type="PDBsum" id="4U24"/>
<dbReference type="PDBsum" id="4U25"/>
<dbReference type="PDBsum" id="4U26"/>
<dbReference type="PDBsum" id="4U27"/>
<dbReference type="PDBsum" id="4UY8"/>
<dbReference type="PDBsum" id="4V47"/>
<dbReference type="PDBsum" id="4V48"/>
<dbReference type="PDBsum" id="4V4H"/>
<dbReference type="PDBsum" id="4V4Q"/>
<dbReference type="PDBsum" id="4V50"/>
<dbReference type="PDBsum" id="4V52"/>
<dbReference type="PDBsum" id="4V53"/>
<dbReference type="PDBsum" id="4V54"/>
<dbReference type="PDBsum" id="4V55"/>
<dbReference type="PDBsum" id="4V56"/>
<dbReference type="PDBsum" id="4V57"/>
<dbReference type="PDBsum" id="4V5B"/>
<dbReference type="PDBsum" id="4V5H"/>
<dbReference type="PDBsum" id="4V5Y"/>
<dbReference type="PDBsum" id="4V64"/>
<dbReference type="PDBsum" id="4V65"/>
<dbReference type="PDBsum" id="4V66"/>
<dbReference type="PDBsum" id="4V69"/>
<dbReference type="PDBsum" id="4V6C"/>
<dbReference type="PDBsum" id="4V6D"/>
<dbReference type="PDBsum" id="4V6E"/>
<dbReference type="PDBsum" id="4V6K"/>
<dbReference type="PDBsum" id="4V6L"/>
<dbReference type="PDBsum" id="4V6M"/>
<dbReference type="PDBsum" id="4V6N"/>
<dbReference type="PDBsum" id="4V6O"/>
<dbReference type="PDBsum" id="4V6P"/>
<dbReference type="PDBsum" id="4V6Q"/>
<dbReference type="PDBsum" id="4V6R"/>
<dbReference type="PDBsum" id="4V6S"/>
<dbReference type="PDBsum" id="4V6T"/>
<dbReference type="PDBsum" id="4V6V"/>
<dbReference type="PDBsum" id="4V6Y"/>
<dbReference type="PDBsum" id="4V6Z"/>
<dbReference type="PDBsum" id="4V70"/>
<dbReference type="PDBsum" id="4V71"/>
<dbReference type="PDBsum" id="4V72"/>
<dbReference type="PDBsum" id="4V73"/>
<dbReference type="PDBsum" id="4V74"/>
<dbReference type="PDBsum" id="4V75"/>
<dbReference type="PDBsum" id="4V76"/>
<dbReference type="PDBsum" id="4V77"/>
<dbReference type="PDBsum" id="4V78"/>
<dbReference type="PDBsum" id="4V79"/>
<dbReference type="PDBsum" id="4V7A"/>
<dbReference type="PDBsum" id="4V7B"/>
<dbReference type="PDBsum" id="4V7C"/>
<dbReference type="PDBsum" id="4V7D"/>
<dbReference type="PDBsum" id="4V7I"/>
<dbReference type="PDBsum" id="4V7S"/>
<dbReference type="PDBsum" id="4V7T"/>
<dbReference type="PDBsum" id="4V7U"/>
<dbReference type="PDBsum" id="4V7V"/>
<dbReference type="PDBsum" id="4V85"/>
<dbReference type="PDBsum" id="4V89"/>
<dbReference type="PDBsum" id="4V9C"/>
<dbReference type="PDBsum" id="4V9D"/>
<dbReference type="PDBsum" id="4V9O"/>
<dbReference type="PDBsum" id="4V9P"/>
<dbReference type="PDBsum" id="4WF1"/>
<dbReference type="PDBsum" id="4WOI"/>
<dbReference type="PDBsum" id="4WWW"/>
<dbReference type="PDBsum" id="4YBB"/>
<dbReference type="PDBsum" id="5ADY"/>
<dbReference type="PDBsum" id="5AFI"/>
<dbReference type="PDBsum" id="5AKA"/>
<dbReference type="PDBsum" id="5GAD"/>
<dbReference type="PDBsum" id="5GAE"/>
<dbReference type="PDBsum" id="5GAF"/>
<dbReference type="PDBsum" id="5GAG"/>
<dbReference type="PDBsum" id="5GAH"/>
<dbReference type="PDBsum" id="5H5U"/>
<dbReference type="PDBsum" id="5IQR"/>
<dbReference type="PDBsum" id="5IT8"/>
<dbReference type="PDBsum" id="5J5B"/>
<dbReference type="PDBsum" id="5J7L"/>
<dbReference type="PDBsum" id="5J88"/>
<dbReference type="PDBsum" id="5J8A"/>
<dbReference type="PDBsum" id="5J91"/>
<dbReference type="PDBsum" id="5JC9"/>
<dbReference type="PDBsum" id="5JTE"/>
<dbReference type="PDBsum" id="5JU8"/>
<dbReference type="PDBsum" id="5KCR"/>
<dbReference type="PDBsum" id="5KCS"/>
<dbReference type="PDBsum" id="5KPS"/>
<dbReference type="PDBsum" id="5KPV"/>
<dbReference type="PDBsum" id="5KPW"/>
<dbReference type="PDBsum" id="5KPX"/>
<dbReference type="PDBsum" id="5L3P"/>
<dbReference type="PDBsum" id="5LZA"/>
<dbReference type="PDBsum" id="5LZB"/>
<dbReference type="PDBsum" id="5LZC"/>
<dbReference type="PDBsum" id="5LZD"/>
<dbReference type="PDBsum" id="5LZE"/>
<dbReference type="PDBsum" id="5LZF"/>
<dbReference type="PDBsum" id="5MDV"/>
<dbReference type="PDBsum" id="5MDW"/>
<dbReference type="PDBsum" id="5MDY"/>
<dbReference type="PDBsum" id="5MDZ"/>
<dbReference type="PDBsum" id="5MGP"/>
<dbReference type="PDBsum" id="5NCO"/>
<dbReference type="PDBsum" id="5NP6"/>
<dbReference type="PDBsum" id="5NWY"/>
<dbReference type="PDBsum" id="5O2R"/>
<dbReference type="PDBsum" id="5U4I"/>
<dbReference type="PDBsum" id="5U9F"/>
<dbReference type="PDBsum" id="5U9G"/>
<dbReference type="PDBsum" id="5UYK"/>
<dbReference type="PDBsum" id="5UYL"/>
<dbReference type="PDBsum" id="5UYM"/>
<dbReference type="PDBsum" id="5UYN"/>
<dbReference type="PDBsum" id="5UYP"/>
<dbReference type="PDBsum" id="5UYQ"/>
<dbReference type="PDBsum" id="5WDT"/>
<dbReference type="PDBsum" id="5WE4"/>
<dbReference type="PDBsum" id="5WE6"/>
<dbReference type="PDBsum" id="5WF0"/>
<dbReference type="PDBsum" id="5WFK"/>
<dbReference type="PDBsum" id="5WFS"/>
<dbReference type="PDBsum" id="6BU8"/>
<dbReference type="PDBsum" id="6BY1"/>
<dbReference type="PDBsum" id="6C4I"/>
<dbReference type="PDBsum" id="6DNC"/>
<dbReference type="PDBsum" id="6ENF"/>
<dbReference type="PDBsum" id="6ENJ"/>
<dbReference type="PDBsum" id="6ENU"/>
<dbReference type="PDBsum" id="6GWT"/>
<dbReference type="PDBsum" id="6GXM"/>
<dbReference type="PDBsum" id="6GXN"/>
<dbReference type="PDBsum" id="6GXO"/>
<dbReference type="PDBsum" id="6GXP"/>
<dbReference type="PDBsum" id="6H4N"/>
<dbReference type="PDBsum" id="6H58"/>
<dbReference type="PDBsum" id="6HRM"/>
<dbReference type="PDBsum" id="6I0Y"/>
<dbReference type="PDBsum" id="6O9J"/>
<dbReference type="PDBsum" id="6O9K"/>
<dbReference type="PDBsum" id="6OFX"/>
<dbReference type="PDBsum" id="6OG7"/>
<dbReference type="PDBsum" id="6OGF"/>
<dbReference type="PDBsum" id="6OGG"/>
<dbReference type="PDBsum" id="6OGI"/>
<dbReference type="PDBsum" id="6OM6"/>
<dbReference type="PDBsum" id="6ORE"/>
<dbReference type="PDBsum" id="6OSK"/>
<dbReference type="PDBsum" id="6OSQ"/>
<dbReference type="PDBsum" id="6OST"/>
<dbReference type="PDBsum" id="6OT3"/>
<dbReference type="PDBsum" id="6OUO"/>
<dbReference type="PDBsum" id="6PJ6"/>
<dbReference type="PDBsum" id="6Q98"/>
<dbReference type="PDBsum" id="6Q9A"/>
<dbReference type="PDBsum" id="6QDW"/>
<dbReference type="PDBsum" id="6QUL"/>
<dbReference type="PDBsum" id="6S0K"/>
<dbReference type="PDBsum" id="6SZS"/>
<dbReference type="PDBsum" id="6TBV"/>
<dbReference type="PDBsum" id="6TC3"/>
<dbReference type="PDBsum" id="6U48"/>
<dbReference type="PDBsum" id="6VU3"/>
<dbReference type="PDBsum" id="6VWL"/>
<dbReference type="PDBsum" id="6VWM"/>
<dbReference type="PDBsum" id="6VWN"/>
<dbReference type="PDBsum" id="6VYQ"/>
<dbReference type="PDBsum" id="6VYR"/>
<dbReference type="PDBsum" id="6VYS"/>
<dbReference type="PDBsum" id="6VYT"/>
<dbReference type="PDBsum" id="6VYU"/>
<dbReference type="PDBsum" id="6VYW"/>
<dbReference type="PDBsum" id="6VYX"/>
<dbReference type="PDBsum" id="6VYY"/>
<dbReference type="PDBsum" id="6VYZ"/>
<dbReference type="PDBsum" id="6VZ2"/>
<dbReference type="PDBsum" id="6VZ3"/>
<dbReference type="PDBsum" id="6VZ5"/>
<dbReference type="PDBsum" id="6VZ7"/>
<dbReference type="PDBsum" id="6VZJ"/>
<dbReference type="PDBsum" id="6WD0"/>
<dbReference type="PDBsum" id="6WD1"/>
<dbReference type="PDBsum" id="6WD2"/>
<dbReference type="PDBsum" id="6WD3"/>
<dbReference type="PDBsum" id="6WD4"/>
<dbReference type="PDBsum" id="6WD5"/>
<dbReference type="PDBsum" id="6WD6"/>
<dbReference type="PDBsum" id="6WD7"/>
<dbReference type="PDBsum" id="6WD8"/>
<dbReference type="PDBsum" id="6WD9"/>
<dbReference type="PDBsum" id="6WDA"/>
<dbReference type="PDBsum" id="6WDB"/>
<dbReference type="PDBsum" id="6WDC"/>
<dbReference type="PDBsum" id="6WDD"/>
<dbReference type="PDBsum" id="6WDE"/>
<dbReference type="PDBsum" id="6WDF"/>
<dbReference type="PDBsum" id="6WDG"/>
<dbReference type="PDBsum" id="6WDH"/>
<dbReference type="PDBsum" id="6WDI"/>
<dbReference type="PDBsum" id="6WDJ"/>
<dbReference type="PDBsum" id="6WDK"/>
<dbReference type="PDBsum" id="6WDL"/>
<dbReference type="PDBsum" id="6WDM"/>
<dbReference type="PDBsum" id="6WNT"/>
<dbReference type="PDBsum" id="6WNV"/>
<dbReference type="PDBsum" id="6WNW"/>
<dbReference type="PDBsum" id="6X6T"/>
<dbReference type="PDBsum" id="6X7F"/>
<dbReference type="PDBsum" id="6X7K"/>
<dbReference type="PDBsum" id="6X9Q"/>
<dbReference type="PDBsum" id="6XDQ"/>
<dbReference type="PDBsum" id="6XDR"/>
<dbReference type="PDBsum" id="6XGF"/>
<dbReference type="PDBsum" id="6XII"/>
<dbReference type="PDBsum" id="6XIJ"/>
<dbReference type="PDBsum" id="6XZ7"/>
<dbReference type="PDBsum" id="6XZA"/>
<dbReference type="PDBsum" id="6XZB"/>
<dbReference type="PDBsum" id="6Y69"/>
<dbReference type="PDBsum" id="6YS3"/>
<dbReference type="PDBsum" id="6YSR"/>
<dbReference type="PDBsum" id="6YSS"/>
<dbReference type="PDBsum" id="6YST"/>
<dbReference type="PDBsum" id="6YSU"/>
<dbReference type="PDBsum" id="6ZTJ"/>
<dbReference type="PDBsum" id="6ZTL"/>
<dbReference type="PDBsum" id="6ZTM"/>
<dbReference type="PDBsum" id="6ZTN"/>
<dbReference type="PDBsum" id="6ZTO"/>
<dbReference type="PDBsum" id="6ZTP"/>
<dbReference type="PDBsum" id="6ZU1"/>
<dbReference type="PDBsum" id="7ABZ"/>
<dbReference type="PDBsum" id="7AC7"/>
<dbReference type="PDBsum" id="7ACJ"/>
<dbReference type="PDBsum" id="7ACR"/>
<dbReference type="PDBsum" id="7B5K"/>
<dbReference type="PDBsum" id="7BL4"/>
<dbReference type="PDBsum" id="7BL6"/>
<dbReference type="PDBsum" id="7BV8"/>
<dbReference type="PDBsum" id="7D6Z"/>
<dbReference type="PDBsum" id="7D80"/>
<dbReference type="PDBsum" id="7JSS"/>
<dbReference type="PDBsum" id="7JSW"/>
<dbReference type="PDBsum" id="7JSZ"/>
<dbReference type="PDBsum" id="7JT1"/>
<dbReference type="PDBsum" id="7JT2"/>
<dbReference type="PDBsum" id="7JT3"/>
<dbReference type="PDBsum" id="7K00"/>
<dbReference type="PDBsum" id="7K50"/>
<dbReference type="PDBsum" id="7K51"/>
<dbReference type="PDBsum" id="7K52"/>
<dbReference type="PDBsum" id="7K53"/>
<dbReference type="PDBsum" id="7K54"/>
<dbReference type="PDBsum" id="7K55"/>
<dbReference type="PDBsum" id="7LV0"/>
<dbReference type="PDBsum" id="7LVK"/>
<dbReference type="PDBsum" id="7M5D"/>
<dbReference type="PDBsum" id="7N1P"/>
<dbReference type="PDBsum" id="7N2C"/>
<dbReference type="PDBsum" id="7N2U"/>
<dbReference type="PDBsum" id="7N2V"/>
<dbReference type="PDBsum" id="7N30"/>
<dbReference type="PDBsum" id="7N31"/>
<dbReference type="PDBsum" id="7NBU"/>
<dbReference type="PDBsum" id="7NSO"/>
<dbReference type="PDBsum" id="7NSP"/>
<dbReference type="PDBsum" id="7NSQ"/>
<dbReference type="PDBsum" id="7NWT"/>
<dbReference type="PDBsum" id="7NWW"/>
<dbReference type="PDBsum" id="7O19"/>
<dbReference type="PDBsum" id="7O1A"/>
<dbReference type="PDBsum" id="7O1C"/>
<dbReference type="PDBsum" id="7OIF"/>
<dbReference type="PDBsum" id="7OIG"/>
<dbReference type="PDBsum" id="7OII"/>
<dbReference type="PDBsum" id="7OIZ"/>
<dbReference type="PDBsum" id="7OJ0"/>
<dbReference type="PDBsum" id="7OT5"/>
<dbReference type="PDBsum" id="7P3K"/>
<dbReference type="PDBsum" id="7PJS"/>
<dbReference type="PDBsum" id="7PJT"/>
<dbReference type="PDBsum" id="7PJU"/>
<dbReference type="PDBsum" id="7PJV"/>
<dbReference type="PDBsum" id="7PJW"/>
<dbReference type="PDBsum" id="7PJX"/>
<dbReference type="PDBsum" id="7PJY"/>
<dbReference type="PDBsum" id="7PJZ"/>
<dbReference type="PDBsum" id="7Q4K"/>
<dbReference type="PDBsum" id="7QGN"/>
<dbReference type="PDBsum" id="7QGR"/>
<dbReference type="PDBsum" id="7QQ3"/>
<dbReference type="PDBsum" id="7S1G"/>
<dbReference type="PDBsum" id="7S1H"/>
<dbReference type="PDBsum" id="7S1I"/>
<dbReference type="PDBsum" id="7S1J"/>
<dbReference type="PDBsum" id="7S1K"/>
<dbReference type="PDBsum" id="7SA4"/>
<dbReference type="PDBsum" id="7SS9"/>
<dbReference type="PDBsum" id="7SSD"/>
<dbReference type="PDBsum" id="7SSL"/>
<dbReference type="PDBsum" id="7SSN"/>
<dbReference type="PDBsum" id="7SSO"/>
<dbReference type="PDBsum" id="7SSW"/>
<dbReference type="PDBsum" id="7ST2"/>
<dbReference type="PDBsum" id="7ST6"/>
<dbReference type="PDBsum" id="7ST7"/>
<dbReference type="PDBsum" id="7TOS"/>
<dbReference type="PDBsum" id="7UG7"/>
<dbReference type="PDBsum" id="7UPH"/>
<dbReference type="PDBsum" id="7Y7C"/>
<dbReference type="PDBsum" id="7Y7D"/>
<dbReference type="PDBsum" id="7Y7E"/>
<dbReference type="PDBsum" id="7Y7F"/>
<dbReference type="PDBsum" id="7Y7G"/>
<dbReference type="PDBsum" id="7Y7H"/>
<dbReference type="PDBsum" id="7YLA"/>
<dbReference type="PDBsum" id="7ZQ5"/>
<dbReference type="PDBsum" id="7ZTA"/>
<dbReference type="PDBsum" id="8A3L"/>
<dbReference type="PDBsum" id="8AKN"/>
<dbReference type="PDBsum" id="8AM9"/>
<dbReference type="PDBsum" id="8ANA"/>
<dbReference type="PDBsum" id="8AP4"/>
<dbReference type="PDBsum" id="8AYE"/>
<dbReference type="PDBsum" id="8B0X"/>
<dbReference type="PDBsum" id="8B7Y"/>
<dbReference type="PDBsum" id="8BF7"/>
<dbReference type="PDBsum" id="8BGE"/>
<dbReference type="PDBsum" id="8BGH"/>
<dbReference type="PDBsum" id="8BH4"/>
<dbReference type="PDBsum" id="8BHJ"/>
<dbReference type="PDBsum" id="8BHL"/>
<dbReference type="PDBsum" id="8BHN"/>
<dbReference type="PDBsum" id="8BHP"/>
<dbReference type="PDBsum" id="8BIL"/>
<dbReference type="PDBsum" id="8BIM"/>
<dbReference type="PDBsum" id="8CAM"/>
<dbReference type="PDBsum" id="8CEU"/>
<dbReference type="PDBsum" id="8CGD"/>
<dbReference type="PDBsum" id="8CGK"/>
<dbReference type="PDBsum" id="8CGV"/>
<dbReference type="PDBsum" id="8EIU"/>
<dbReference type="PDBsum" id="8EKC"/>
<dbReference type="PDBsum" id="8EMM"/>
<dbReference type="PDBsum" id="8FIZ"/>
<dbReference type="PDBsum" id="8FTO"/>
<dbReference type="PDBsum" id="8FZD"/>
<dbReference type="PDBsum" id="8FZE"/>
<dbReference type="PDBsum" id="8FZF"/>
<dbReference type="PDBsum" id="8FZG"/>
<dbReference type="PDBsum" id="8FZH"/>
<dbReference type="PDBsum" id="8FZI"/>
<dbReference type="PDBsum" id="8FZJ"/>
<dbReference type="PDBsum" id="8G2U"/>
<dbReference type="PDBsum" id="8G31"/>
<dbReference type="PDBsum" id="8G34"/>
<dbReference type="PDBsum" id="8G38"/>
<dbReference type="PDBsum" id="8G6W"/>
<dbReference type="PDBsum" id="8G6X"/>
<dbReference type="PDBsum" id="8G6Y"/>
<dbReference type="PDBsum" id="8G7P"/>
<dbReference type="PDBsum" id="8G7Q"/>
<dbReference type="PDBsum" id="8G7R"/>
<dbReference type="PDBsum" id="8G7S"/>
<dbReference type="PDBsum" id="8HSP"/>
<dbReference type="PDBsum" id="8HTZ"/>
<dbReference type="PDBsum" id="8HU1"/>
<dbReference type="PDBsum" id="8IFB"/>
<dbReference type="PDBsum" id="8IFC"/>
<dbReference type="PDBsum" id="8P16"/>
<dbReference type="PDBsum" id="8P17"/>
<dbReference type="PDBsum" id="8P18"/>
<dbReference type="PDBsum" id="8PEG"/>
<dbReference type="PDBsum" id="8PHJ"/>
<dbReference type="PDBsum" id="8PKL"/>
<dbReference type="PDBsum" id="8PVA"/>
<dbReference type="PDBsum" id="8Q4F"/>
<dbReference type="PDBsum" id="8QBT"/>
<dbReference type="PDBsum" id="8QK7"/>
<dbReference type="PDBsum" id="8QOA"/>
<dbReference type="PDBsum" id="8R6C"/>
<dbReference type="PDBsum" id="8R8M"/>
<dbReference type="PDBsum" id="8RPY"/>
<dbReference type="PDBsum" id="8RPZ"/>
<dbReference type="PDBsum" id="8RQ0"/>
<dbReference type="PDBsum" id="8RQ2"/>
<dbReference type="PDBsum" id="8SYL"/>
<dbReference type="PDBsum" id="8T5D"/>
<dbReference type="PDBsum" id="8T5H"/>
<dbReference type="PDBsum" id="8VS9"/>
<dbReference type="PDBsum" id="8VSA"/>
<dbReference type="PDBsum" id="8W51"/>
<dbReference type="PDBsum" id="8YUO"/>
<dbReference type="PDBsum" id="8YUP"/>
<dbReference type="PDBsum" id="8YUQ"/>
<dbReference type="PDBsum" id="8YUR"/>
<dbReference type="PDBsum" id="8YUS"/>
<dbReference type="PDBsum" id="9D89"/>
<dbReference type="PDBsum" id="9FBV"/>
<dbReference type="PDBsum" id="9GFT"/>
<dbReference type="PDBsum" id="9GGR"/>
<dbReference type="PDBsum" id="9GR1"/>
<dbReference type="PDBsum" id="9H3O"/>
<dbReference type="PDBsum" id="9H3Q"/>
<dbReference type="PDBsum" id="9H3R"/>
<dbReference type="PDBsum" id="9H3S"/>
<dbReference type="PDBsum" id="9H3Y"/>
<dbReference type="PDBsum" id="9H3Z"/>
<dbReference type="PDBsum" id="9HA6"/>
<dbReference type="PDBsum" id="9MOR"/>
<dbReference type="PDBsum" id="9MQ4"/>
<dbReference type="EMDB" id="EMD-0076"/>
<dbReference type="EMDB" id="EMD-0080"/>
<dbReference type="EMDB" id="EMD-0081"/>
<dbReference type="EMDB" id="EMD-0082"/>
<dbReference type="EMDB" id="EMD-0083"/>
<dbReference type="EMDB" id="EMD-0137"/>
<dbReference type="EMDB" id="EMD-0139"/>
<dbReference type="EMDB" id="EMD-0261"/>
<dbReference type="EMDB" id="EMD-0322"/>
<dbReference type="EMDB" id="EMD-10073"/>
<dbReference type="EMDB" id="EMD-10353"/>
<dbReference type="EMDB" id="EMD-10453"/>
<dbReference type="EMDB" id="EMD-10458"/>
<dbReference type="EMDB" id="EMD-10655"/>
<dbReference type="EMDB" id="EMD-10656"/>
<dbReference type="EMDB" id="EMD-10657"/>
<dbReference type="EMDB" id="EMD-10705"/>
<dbReference type="EMDB" id="EMD-10905"/>
<dbReference type="EMDB" id="EMD-10906"/>
<dbReference type="EMDB" id="EMD-10907"/>
<dbReference type="EMDB" id="EMD-10908"/>
<dbReference type="EMDB" id="EMD-11710"/>
<dbReference type="EMDB" id="EMD-11713"/>
<dbReference type="EMDB" id="EMD-11717"/>
<dbReference type="EMDB" id="EMD-11718"/>
<dbReference type="EMDB" id="EMD-12035"/>
<dbReference type="EMDB" id="EMD-12219"/>
<dbReference type="EMDB" id="EMD-12261"/>
<dbReference type="EMDB" id="EMD-12573"/>
<dbReference type="EMDB" id="EMD-12574"/>
<dbReference type="EMDB" id="EMD-12575"/>
<dbReference type="EMDB" id="EMD-12635"/>
<dbReference type="EMDB" id="EMD-12636"/>
<dbReference type="EMDB" id="EMD-12693"/>
<dbReference type="EMDB" id="EMD-12694"/>
<dbReference type="EMDB" id="EMD-12695"/>
<dbReference type="EMDB" id="EMD-12928"/>
<dbReference type="EMDB" id="EMD-12929"/>
<dbReference type="EMDB" id="EMD-12930"/>
<dbReference type="EMDB" id="EMD-12936"/>
<dbReference type="EMDB" id="EMD-12937"/>
<dbReference type="EMDB" id="EMD-13055"/>
<dbReference type="EMDB" id="EMD-13180"/>
<dbReference type="EMDB" id="EMD-13458"/>
<dbReference type="EMDB" id="EMD-13459"/>
<dbReference type="EMDB" id="EMD-13460"/>
<dbReference type="EMDB" id="EMD-13461"/>
<dbReference type="EMDB" id="EMD-13462"/>
<dbReference type="EMDB" id="EMD-13463"/>
<dbReference type="EMDB" id="EMD-13464"/>
<dbReference type="EMDB" id="EMD-13465"/>
<dbReference type="EMDB" id="EMD-13805"/>
<dbReference type="EMDB" id="EMD-13956"/>
<dbReference type="EMDB" id="EMD-13958"/>
<dbReference type="EMDB" id="EMD-14121"/>
<dbReference type="EMDB" id="EMD-14864"/>
<dbReference type="EMDB" id="EMD-14956"/>
<dbReference type="EMDB" id="EMD-15116"/>
<dbReference type="EMDB" id="EMD-15558"/>
<dbReference type="EMDB" id="EMD-15712"/>
<dbReference type="EMDB" id="EMD-15793"/>
<dbReference type="EMDB" id="EMD-15905"/>
<dbReference type="EMDB" id="EMD-16015"/>
<dbReference type="EMDB" id="EMD-16029"/>
<dbReference type="EMDB" id="EMD-16031"/>
<dbReference type="EMDB" id="EMD-16047"/>
<dbReference type="EMDB" id="EMD-16057"/>
<dbReference type="EMDB" id="EMD-16059"/>
<dbReference type="EMDB" id="EMD-16062"/>
<dbReference type="EMDB" id="EMD-16065"/>
<dbReference type="EMDB" id="EMD-16081"/>
<dbReference type="EMDB" id="EMD-16082"/>
<dbReference type="EMDB" id="EMD-16530"/>
<dbReference type="EMDB" id="EMD-16613"/>
<dbReference type="EMDB" id="EMD-16641"/>
<dbReference type="EMDB" id="EMD-16646"/>
<dbReference type="EMDB" id="EMD-16652"/>
<dbReference type="EMDB" id="EMD-17346"/>
<dbReference type="EMDB" id="EMD-17347"/>
<dbReference type="EMDB" id="EMD-17348"/>
<dbReference type="EMDB" id="EMD-17631"/>
<dbReference type="EMDB" id="EMD-17667"/>
<dbReference type="EMDB" id="EMD-17743"/>
<dbReference type="EMDB" id="EMD-17959"/>
<dbReference type="EMDB" id="EMD-18145"/>
<dbReference type="EMDB" id="EMD-18320"/>
<dbReference type="EMDB" id="EMD-18458"/>
<dbReference type="EMDB" id="EMD-18534"/>
<dbReference type="EMDB" id="EMD-18950"/>
<dbReference type="EMDB" id="EMD-19004"/>
<dbReference type="EMDB" id="EMD-19426"/>
<dbReference type="EMDB" id="EMD-19427"/>
<dbReference type="EMDB" id="EMD-19428"/>
<dbReference type="EMDB" id="EMD-19429"/>
<dbReference type="EMDB" id="EMD-20048"/>
<dbReference type="EMDB" id="EMD-20052"/>
<dbReference type="EMDB" id="EMD-21420"/>
<dbReference type="EMDB" id="EMD-21421"/>
<dbReference type="EMDB" id="EMD-21422"/>
<dbReference type="EMDB" id="EMD-21625"/>
<dbReference type="EMDB" id="EMD-21630"/>
<dbReference type="EMDB" id="EMD-21631"/>
<dbReference type="EMDB" id="EMD-21632"/>
<dbReference type="EMDB" id="EMD-21633"/>
<dbReference type="EMDB" id="EMD-21634"/>
<dbReference type="EMDB" id="EMD-21635"/>
<dbReference type="EMDB" id="EMD-21636"/>
<dbReference type="EMDB" id="EMD-21637"/>
<dbReference type="EMDB" id="EMD-21638"/>
<dbReference type="EMDB" id="EMD-21639"/>
<dbReference type="EMDB" id="EMD-21640"/>
<dbReference type="EMDB" id="EMD-21641"/>
<dbReference type="EMDB" id="EMD-21856"/>
<dbReference type="EMDB" id="EMD-21857"/>
<dbReference type="EMDB" id="EMD-21858"/>
<dbReference type="EMDB" id="EMD-22459"/>
<dbReference type="EMDB" id="EMD-22461"/>
<dbReference type="EMDB" id="EMD-22464"/>
<dbReference type="EMDB" id="EMD-22466"/>
<dbReference type="EMDB" id="EMD-22469"/>
<dbReference type="EMDB" id="EMD-22472"/>
<dbReference type="EMDB" id="EMD-22669"/>
<dbReference type="EMDB" id="EMD-22670"/>
<dbReference type="EMDB" id="EMD-22671"/>
<dbReference type="EMDB" id="EMD-22672"/>
<dbReference type="EMDB" id="EMD-22673"/>
<dbReference type="EMDB" id="EMD-22674"/>
<dbReference type="EMDB" id="EMD-23528"/>
<dbReference type="EMDB" id="EMD-24120"/>
<dbReference type="EMDB" id="EMD-24132"/>
<dbReference type="EMDB" id="EMD-24133"/>
<dbReference type="EMDB" id="EMD-24134"/>
<dbReference type="EMDB" id="EMD-24135"/>
<dbReference type="EMDB" id="EMD-24136"/>
<dbReference type="EMDB" id="EMD-24803"/>
<dbReference type="EMDB" id="EMD-25405"/>
<dbReference type="EMDB" id="EMD-25407"/>
<dbReference type="EMDB" id="EMD-25409"/>
<dbReference type="EMDB" id="EMD-25410"/>
<dbReference type="EMDB" id="EMD-25411"/>
<dbReference type="EMDB" id="EMD-25415"/>
<dbReference type="EMDB" id="EMD-25418"/>
<dbReference type="EMDB" id="EMD-25420"/>
<dbReference type="EMDB" id="EMD-25421"/>
<dbReference type="EMDB" id="EMD-30215"/>
<dbReference type="EMDB" id="EMD-30598"/>
<dbReference type="EMDB" id="EMD-30611"/>
<dbReference type="EMDB" id="EMD-33660"/>
<dbReference type="EMDB" id="EMD-33661"/>
<dbReference type="EMDB" id="EMD-33662"/>
<dbReference type="EMDB" id="EMD-33663"/>
<dbReference type="EMDB" id="EMD-33664"/>
<dbReference type="EMDB" id="EMD-33665"/>
<dbReference type="EMDB" id="EMD-33904"/>
<dbReference type="EMDB" id="EMD-3489"/>
<dbReference type="EMDB" id="EMD-3490"/>
<dbReference type="EMDB" id="EMD-3492"/>
<dbReference type="EMDB" id="EMD-3493"/>
<dbReference type="EMDB" id="EMD-35001"/>
<dbReference type="EMDB" id="EMD-35020"/>
<dbReference type="EMDB" id="EMD-35022"/>
<dbReference type="EMDB" id="EMD-3508"/>
<dbReference type="EMDB" id="EMD-35411"/>
<dbReference type="EMDB" id="EMD-35412"/>
<dbReference type="EMDB" id="EMD-3617"/>
<dbReference type="EMDB" id="EMD-3713"/>
<dbReference type="EMDB" id="EMD-37271"/>
<dbReference type="EMDB" id="EMD-3730"/>
<dbReference type="EMDB" id="EMD-3898"/>
<dbReference type="EMDB" id="EMD-3899"/>
<dbReference type="EMDB" id="EMD-3903"/>
<dbReference type="EMDB" id="EMD-39577"/>
<dbReference type="EMDB" id="EMD-39578"/>
<dbReference type="EMDB" id="EMD-39579"/>
<dbReference type="EMDB" id="EMD-39580"/>
<dbReference type="EMDB" id="EMD-39581"/>
<dbReference type="EMDB" id="EMD-4001"/>
<dbReference type="EMDB" id="EMD-4121"/>
<dbReference type="EMDB" id="EMD-4122"/>
<dbReference type="EMDB" id="EMD-4123"/>
<dbReference type="EMDB" id="EMD-4124"/>
<dbReference type="EMDB" id="EMD-4125"/>
<dbReference type="EMDB" id="EMD-4126"/>
<dbReference type="EMDB" id="EMD-4477"/>
<dbReference type="EMDB" id="EMD-4478"/>
<dbReference type="EMDB" id="EMD-4638"/>
<dbReference type="EMDB" id="EMD-50296"/>
<dbReference type="EMDB" id="EMD-51318"/>
<dbReference type="EMDB" id="EMD-51340"/>
<dbReference type="EMDB" id="EMD-51832"/>
<dbReference type="EMDB" id="EMD-51834"/>
<dbReference type="EMDB" id="EMD-51835"/>
<dbReference type="EMDB" id="EMD-51836"/>
<dbReference type="EMDB" id="EMD-51842"/>
<dbReference type="EMDB" id="EMD-51843"/>
<dbReference type="EMDB" id="EMD-51978"/>
<dbReference type="EMDB" id="EMD-6667"/>
<dbReference type="EMDB" id="EMD-7289"/>
<dbReference type="EMDB" id="EMD-7341"/>
<dbReference type="EMDB" id="EMD-7970"/>
<dbReference type="EMDB" id="EMD-8000"/>
<dbReference type="EMDB" id="EMD-8001"/>
<dbReference type="EMDB" id="EMD-8002"/>
<dbReference type="EMDB" id="EMD-8003"/>
<dbReference type="EMDB" id="EMD-8004"/>
<dbReference type="EMDB" id="EMD-8107"/>
<dbReference type="EMDB" id="EMD-8175"/>
<dbReference type="EMDB" id="EMD-8176"/>
<dbReference type="EMDB" id="EMD-8237"/>
<dbReference type="EMDB" id="EMD-8238"/>
<dbReference type="EMDB" id="EMD-8279"/>
<dbReference type="EMDB" id="EMD-8280"/>
<dbReference type="EMDB" id="EMD-8281"/>
<dbReference type="EMDB" id="EMD-8282"/>
<dbReference type="EMDB" id="EMD-8505"/>
<dbReference type="EMDB" id="EMD-8615"/>
<dbReference type="EMDB" id="EMD-8616"/>
<dbReference type="EMDB" id="EMD-8617"/>
<dbReference type="EMDB" id="EMD-8618"/>
<dbReference type="EMDB" id="EMD-8619"/>
<dbReference type="EMDB" id="EMD-8620"/>
<dbReference type="EMDB" id="EMD-8813"/>
<dbReference type="EMDB" id="EMD-8814"/>
<dbReference type="EMDB" id="EMD-8815"/>
<dbReference type="EMDB" id="EMD-8828"/>
<dbReference type="SMR" id="P0A7Q6"/>
<dbReference type="BioGRID" id="4263387">
    <property type="interactions" value="102"/>
</dbReference>
<dbReference type="ComplexPortal" id="CPX-3807">
    <property type="entry name" value="50S large ribosomal subunit"/>
</dbReference>
<dbReference type="FunCoup" id="P0A7Q6">
    <property type="interactions" value="279"/>
</dbReference>
<dbReference type="IntAct" id="P0A7Q6">
    <property type="interactions" value="16"/>
</dbReference>
<dbReference type="STRING" id="511145.b3299"/>
<dbReference type="jPOST" id="P0A7Q6"/>
<dbReference type="PaxDb" id="511145-b3299"/>
<dbReference type="EnsemblBacteria" id="AAC76324">
    <property type="protein sequence ID" value="AAC76324"/>
    <property type="gene ID" value="b3299"/>
</dbReference>
<dbReference type="GeneID" id="947805"/>
<dbReference type="GeneID" id="98390421"/>
<dbReference type="KEGG" id="ecj:JW3261"/>
<dbReference type="KEGG" id="eco:b3299"/>
<dbReference type="KEGG" id="ecoc:C3026_17935"/>
<dbReference type="PATRIC" id="fig|1411691.4.peg.3432"/>
<dbReference type="EchoBASE" id="EB1214"/>
<dbReference type="eggNOG" id="COG0257">
    <property type="taxonomic scope" value="Bacteria"/>
</dbReference>
<dbReference type="HOGENOM" id="CLU_135723_6_2_6"/>
<dbReference type="InParanoid" id="P0A7Q6"/>
<dbReference type="OrthoDB" id="9802520at2"/>
<dbReference type="PhylomeDB" id="P0A7Q6"/>
<dbReference type="BioCyc" id="EcoCyc:EG11232-MONOMER"/>
<dbReference type="BioCyc" id="MetaCyc:EG11232-MONOMER"/>
<dbReference type="EvolutionaryTrace" id="P0A7Q6"/>
<dbReference type="PRO" id="PR:P0A7Q6"/>
<dbReference type="Proteomes" id="UP000000625">
    <property type="component" value="Chromosome"/>
</dbReference>
<dbReference type="GO" id="GO:0005737">
    <property type="term" value="C:cytoplasm"/>
    <property type="evidence" value="ECO:0000314"/>
    <property type="project" value="ComplexPortal"/>
</dbReference>
<dbReference type="GO" id="GO:0022625">
    <property type="term" value="C:cytosolic large ribosomal subunit"/>
    <property type="evidence" value="ECO:0000314"/>
    <property type="project" value="EcoCyc"/>
</dbReference>
<dbReference type="GO" id="GO:0019843">
    <property type="term" value="F:rRNA binding"/>
    <property type="evidence" value="ECO:0007669"/>
    <property type="project" value="UniProtKB-KW"/>
</dbReference>
<dbReference type="GO" id="GO:0003735">
    <property type="term" value="F:structural constituent of ribosome"/>
    <property type="evidence" value="ECO:0007669"/>
    <property type="project" value="InterPro"/>
</dbReference>
<dbReference type="GO" id="GO:0002181">
    <property type="term" value="P:cytoplasmic translation"/>
    <property type="evidence" value="ECO:0000303"/>
    <property type="project" value="ComplexPortal"/>
</dbReference>
<dbReference type="GO" id="GO:0006412">
    <property type="term" value="P:translation"/>
    <property type="evidence" value="ECO:0000315"/>
    <property type="project" value="EcoCyc"/>
</dbReference>
<dbReference type="HAMAP" id="MF_00251">
    <property type="entry name" value="Ribosomal_bL36"/>
    <property type="match status" value="1"/>
</dbReference>
<dbReference type="InterPro" id="IPR000473">
    <property type="entry name" value="Ribosomal_bL36"/>
</dbReference>
<dbReference type="InterPro" id="IPR035977">
    <property type="entry name" value="Ribosomal_bL36_sp"/>
</dbReference>
<dbReference type="NCBIfam" id="TIGR01022">
    <property type="entry name" value="rpmJ_bact"/>
    <property type="match status" value="1"/>
</dbReference>
<dbReference type="PANTHER" id="PTHR42888">
    <property type="entry name" value="50S RIBOSOMAL PROTEIN L36, CHLOROPLASTIC"/>
    <property type="match status" value="1"/>
</dbReference>
<dbReference type="PANTHER" id="PTHR42888:SF1">
    <property type="entry name" value="LARGE RIBOSOMAL SUBUNIT PROTEIN BL36C"/>
    <property type="match status" value="1"/>
</dbReference>
<dbReference type="Pfam" id="PF00444">
    <property type="entry name" value="Ribosomal_L36"/>
    <property type="match status" value="1"/>
</dbReference>
<dbReference type="SUPFAM" id="SSF57840">
    <property type="entry name" value="Ribosomal protein L36"/>
    <property type="match status" value="1"/>
</dbReference>
<dbReference type="PROSITE" id="PS00828">
    <property type="entry name" value="RIBOSOMAL_L36"/>
    <property type="match status" value="1"/>
</dbReference>
<keyword id="KW-0002">3D-structure</keyword>
<keyword id="KW-0903">Direct protein sequencing</keyword>
<keyword id="KW-1185">Reference proteome</keyword>
<keyword id="KW-0687">Ribonucleoprotein</keyword>
<keyword id="KW-0689">Ribosomal protein</keyword>
<keyword id="KW-0694">RNA-binding</keyword>
<keyword id="KW-0699">rRNA-binding</keyword>
<feature type="chain" id="PRO_0000126183" description="Large ribosomal subunit protein bL36A">
    <location>
        <begin position="1"/>
        <end position="38"/>
    </location>
</feature>
<feature type="strand" evidence="16">
    <location>
        <begin position="2"/>
        <end position="6"/>
    </location>
</feature>
<feature type="strand" evidence="16">
    <location>
        <begin position="14"/>
        <end position="19"/>
    </location>
</feature>
<feature type="strand" evidence="16">
    <location>
        <begin position="22"/>
        <end position="29"/>
    </location>
</feature>
<feature type="helix" evidence="16">
    <location>
        <begin position="31"/>
        <end position="33"/>
    </location>
</feature>
<feature type="strand" evidence="16">
    <location>
        <begin position="35"/>
        <end position="37"/>
    </location>
</feature>
<accession>P0A7Q6</accession>
<accession>P21194</accession>
<accession>Q2M6W4</accession>